<reference key="1">
    <citation type="journal article" date="1995" name="Mol. Cell. Biol.">
        <title>Molecular cloning and expression of human cDNAs encoding a novel DNA ligase IV and DNA ligase III, an enzyme active in DNA repair and recombination.</title>
        <authorList>
            <person name="Wei Y.-F."/>
            <person name="Robins P."/>
            <person name="Carter K."/>
            <person name="Caldecott K."/>
            <person name="Pappin D.J.C."/>
            <person name="Yu G.-L."/>
            <person name="Wang R.-P."/>
            <person name="Shell B.K."/>
            <person name="Nash R.A."/>
            <person name="Schar P."/>
            <person name="Barnes D.E."/>
            <person name="Haseltine W.A."/>
            <person name="Lindahl T."/>
        </authorList>
    </citation>
    <scope>NUCLEOTIDE SEQUENCE [MRNA]</scope>
    <scope>PARTIAL PROTEIN SEQUENCE</scope>
    <scope>TISSUE SPECIFICITY</scope>
    <source>
        <tissue>Prostate</tissue>
    </source>
</reference>
<reference key="2">
    <citation type="submission" date="2002-01" db="EMBL/GenBank/DDBJ databases">
        <authorList>
            <consortium name="NIEHS SNPs program"/>
        </authorList>
    </citation>
    <scope>NUCLEOTIDE SEQUENCE [GENOMIC DNA]</scope>
    <scope>VARIANTS SER-231 AND THR-857</scope>
</reference>
<reference key="3">
    <citation type="journal article" date="2004" name="Nature">
        <title>The DNA sequence and analysis of human chromosome 13.</title>
        <authorList>
            <person name="Dunham A."/>
            <person name="Matthews L.H."/>
            <person name="Burton J."/>
            <person name="Ashurst J.L."/>
            <person name="Howe K.L."/>
            <person name="Ashcroft K.J."/>
            <person name="Beare D.M."/>
            <person name="Burford D.C."/>
            <person name="Hunt S.E."/>
            <person name="Griffiths-Jones S."/>
            <person name="Jones M.C."/>
            <person name="Keenan S.J."/>
            <person name="Oliver K."/>
            <person name="Scott C.E."/>
            <person name="Ainscough R."/>
            <person name="Almeida J.P."/>
            <person name="Ambrose K.D."/>
            <person name="Andrews D.T."/>
            <person name="Ashwell R.I.S."/>
            <person name="Babbage A.K."/>
            <person name="Bagguley C.L."/>
            <person name="Bailey J."/>
            <person name="Bannerjee R."/>
            <person name="Barlow K.F."/>
            <person name="Bates K."/>
            <person name="Beasley H."/>
            <person name="Bird C.P."/>
            <person name="Bray-Allen S."/>
            <person name="Brown A.J."/>
            <person name="Brown J.Y."/>
            <person name="Burrill W."/>
            <person name="Carder C."/>
            <person name="Carter N.P."/>
            <person name="Chapman J.C."/>
            <person name="Clamp M.E."/>
            <person name="Clark S.Y."/>
            <person name="Clarke G."/>
            <person name="Clee C.M."/>
            <person name="Clegg S.C."/>
            <person name="Cobley V."/>
            <person name="Collins J.E."/>
            <person name="Corby N."/>
            <person name="Coville G.J."/>
            <person name="Deloukas P."/>
            <person name="Dhami P."/>
            <person name="Dunham I."/>
            <person name="Dunn M."/>
            <person name="Earthrowl M.E."/>
            <person name="Ellington A.G."/>
            <person name="Faulkner L."/>
            <person name="Frankish A.G."/>
            <person name="Frankland J."/>
            <person name="French L."/>
            <person name="Garner P."/>
            <person name="Garnett J."/>
            <person name="Gilbert J.G.R."/>
            <person name="Gilson C.J."/>
            <person name="Ghori J."/>
            <person name="Grafham D.V."/>
            <person name="Gribble S.M."/>
            <person name="Griffiths C."/>
            <person name="Hall R.E."/>
            <person name="Hammond S."/>
            <person name="Harley J.L."/>
            <person name="Hart E.A."/>
            <person name="Heath P.D."/>
            <person name="Howden P.J."/>
            <person name="Huckle E.J."/>
            <person name="Hunt P.J."/>
            <person name="Hunt A.R."/>
            <person name="Johnson C."/>
            <person name="Johnson D."/>
            <person name="Kay M."/>
            <person name="Kimberley A.M."/>
            <person name="King A."/>
            <person name="Laird G.K."/>
            <person name="Langford C.J."/>
            <person name="Lawlor S."/>
            <person name="Leongamornlert D.A."/>
            <person name="Lloyd D.M."/>
            <person name="Lloyd C."/>
            <person name="Loveland J.E."/>
            <person name="Lovell J."/>
            <person name="Martin S."/>
            <person name="Mashreghi-Mohammadi M."/>
            <person name="McLaren S.J."/>
            <person name="McMurray A."/>
            <person name="Milne S."/>
            <person name="Moore M.J.F."/>
            <person name="Nickerson T."/>
            <person name="Palmer S.A."/>
            <person name="Pearce A.V."/>
            <person name="Peck A.I."/>
            <person name="Pelan S."/>
            <person name="Phillimore B."/>
            <person name="Porter K.M."/>
            <person name="Rice C.M."/>
            <person name="Searle S."/>
            <person name="Sehra H.K."/>
            <person name="Shownkeen R."/>
            <person name="Skuce C.D."/>
            <person name="Smith M."/>
            <person name="Steward C.A."/>
            <person name="Sycamore N."/>
            <person name="Tester J."/>
            <person name="Thomas D.W."/>
            <person name="Tracey A."/>
            <person name="Tromans A."/>
            <person name="Tubby B."/>
            <person name="Wall M."/>
            <person name="Wallis J.M."/>
            <person name="West A.P."/>
            <person name="Whitehead S.L."/>
            <person name="Willey D.L."/>
            <person name="Wilming L."/>
            <person name="Wray P.W."/>
            <person name="Wright M.W."/>
            <person name="Young L."/>
            <person name="Coulson A."/>
            <person name="Durbin R.M."/>
            <person name="Hubbard T."/>
            <person name="Sulston J.E."/>
            <person name="Beck S."/>
            <person name="Bentley D.R."/>
            <person name="Rogers J."/>
            <person name="Ross M.T."/>
        </authorList>
    </citation>
    <scope>NUCLEOTIDE SEQUENCE [LARGE SCALE GENOMIC DNA]</scope>
</reference>
<reference key="4">
    <citation type="journal article" date="2004" name="Genome Res.">
        <title>The status, quality, and expansion of the NIH full-length cDNA project: the Mammalian Gene Collection (MGC).</title>
        <authorList>
            <consortium name="The MGC Project Team"/>
        </authorList>
    </citation>
    <scope>NUCLEOTIDE SEQUENCE [LARGE SCALE MRNA]</scope>
    <source>
        <tissue>Brain</tissue>
    </source>
</reference>
<reference key="5">
    <citation type="journal article" date="1996" name="J. Biol. Chem.">
        <title>DNA ligase IV from HeLa cell nuclei.</title>
        <authorList>
            <person name="Robins P."/>
            <person name="Lindahl T."/>
        </authorList>
    </citation>
    <scope>FUNCTION</scope>
    <scope>SUBCELLULAR LOCATION</scope>
</reference>
<reference key="6">
    <citation type="journal article" date="1997" name="Nature">
        <title>Activity of DNA ligase IV stimulated by complex formation with XRCC4 protein in mammalian cells.</title>
        <authorList>
            <person name="Grawunder U."/>
            <person name="Wilm M."/>
            <person name="Wu X."/>
            <person name="Kulesza P."/>
            <person name="Wilson T.E."/>
            <person name="Mann M."/>
            <person name="Lieber M.R."/>
        </authorList>
    </citation>
    <scope>FUNCTION</scope>
    <scope>CATALYTIC ACTIVITY</scope>
</reference>
<reference key="7">
    <citation type="journal article" date="1998" name="Mol. Cell">
        <title>DNA ligase IV is essential for V(D)J recombination and DNA double-strand break repair in human precursor lymphocytes.</title>
        <authorList>
            <person name="Grawunder U."/>
            <person name="Zimmer D."/>
            <person name="Fugmann S."/>
            <person name="Schwarz K."/>
            <person name="Lieber M.R."/>
        </authorList>
    </citation>
    <scope>FUNCTION</scope>
    <scope>INTERACTION WITH XRCC4</scope>
</reference>
<reference key="8">
    <citation type="journal article" date="1997" name="Curr. Biol.">
        <title>Mammalian DNA double-strand break repair protein XRCC4 interacts with DNA ligase IV.</title>
        <authorList>
            <person name="Critchlow S.E."/>
            <person name="Bowater R.P."/>
            <person name="Jackson S.P."/>
        </authorList>
    </citation>
    <scope>INTERACTION WITH XRCC4</scope>
</reference>
<reference key="9">
    <citation type="journal article" date="2000" name="J. Biol. Chem.">
        <title>Interactions of the DNA ligase IV-XRCC4 complex with DNA ends and the DNA-dependent protein kinase.</title>
        <authorList>
            <person name="Chen L."/>
            <person name="Trujillo K."/>
            <person name="Sung P."/>
            <person name="Tomkinson A.E."/>
        </authorList>
    </citation>
    <scope>FUNCTION</scope>
    <scope>INTERACTION WITH XRCC4; XRCC6; XRCC5 AND PRKDC</scope>
</reference>
<reference key="10">
    <citation type="journal article" date="2003" name="Cancer Res.">
        <title>Requirement for XRCC4 and DNA ligase IV in alignment-based gap filling for nonhomologous DNA end joining in vitro.</title>
        <authorList>
            <person name="Lee J.W."/>
            <person name="Yannone S.M."/>
            <person name="Chen D.J."/>
            <person name="Povirk L.F."/>
        </authorList>
    </citation>
    <scope>FUNCTION</scope>
    <scope>INTERACTION WITH XRCC4</scope>
</reference>
<reference key="11">
    <citation type="journal article" date="2003" name="J. Mol. Biol.">
        <title>Coordinated assembly of Ku and p460 subunits of the DNA-dependent protein kinase on DNA ends is necessary for XRCC4-ligase IV recruitment.</title>
        <authorList>
            <person name="Calsou P."/>
            <person name="Delteil C."/>
            <person name="Frit P."/>
            <person name="Drouet J."/>
            <person name="Salles B."/>
        </authorList>
    </citation>
    <scope>IDENTIFICATION IN A COMPLEX WITH XRCC5; XRCC6 AND PRKDC</scope>
</reference>
<reference key="12">
    <citation type="journal article" date="2007" name="DNA Repair">
        <title>Modes of interaction among yeast Nej1, Lif1 and Dnl4 proteins and comparison to human XLF, XRCC4 and Lig4.</title>
        <authorList>
            <person name="Deshpande R.A."/>
            <person name="Wilson T.E."/>
        </authorList>
    </citation>
    <scope>INTERACTION WITH XRCC4 AND NHEJ1</scope>
</reference>
<reference key="13">
    <citation type="journal article" date="2007" name="EMBO J.">
        <title>XRCC4:DNA ligase IV can ligate incompatible DNA ends and can ligate across gaps.</title>
        <authorList>
            <person name="Gu J."/>
            <person name="Lu H."/>
            <person name="Tippin B."/>
            <person name="Shimazaki N."/>
            <person name="Goodman M.F."/>
            <person name="Lieber M.R."/>
        </authorList>
    </citation>
    <scope>FUNCTION</scope>
    <scope>INTERACTION WITH XRCC4</scope>
</reference>
<reference key="14">
    <citation type="journal article" date="2007" name="EMBO J.">
        <title>A novel human AP endonuclease with conserved zinc-finger-like motifs involved in DNA strand break responses.</title>
        <authorList>
            <person name="Kanno S."/>
            <person name="Kuzuoka H."/>
            <person name="Sasao S."/>
            <person name="Hong Z."/>
            <person name="Lan L."/>
            <person name="Nakajima S."/>
            <person name="Yasui A."/>
        </authorList>
    </citation>
    <scope>INTERACTION WITH APLF</scope>
</reference>
<reference key="15">
    <citation type="journal article" date="2009" name="DNA Repair">
        <title>Electron microscopy of Xrcc4 and the DNA ligase IV-Xrcc4 DNA repair complex.</title>
        <authorList>
            <person name="Recuero-Checa M.A."/>
            <person name="Dore A.S."/>
            <person name="Arias-Palomo E."/>
            <person name="Rivera-Calzada A."/>
            <person name="Scheres S.H."/>
            <person name="Maman J.D."/>
            <person name="Pearl L.H."/>
            <person name="Llorca O."/>
        </authorList>
    </citation>
    <scope>INTERACTION WITH XRCC4</scope>
</reference>
<reference key="16">
    <citation type="journal article" date="2011" name="BMC Syst. Biol.">
        <title>Initial characterization of the human central proteome.</title>
        <authorList>
            <person name="Burkard T.R."/>
            <person name="Planyavsky M."/>
            <person name="Kaupe I."/>
            <person name="Breitwieser F.P."/>
            <person name="Buerckstuemmer T."/>
            <person name="Bennett K.L."/>
            <person name="Superti-Furga G."/>
            <person name="Colinge J."/>
        </authorList>
    </citation>
    <scope>IDENTIFICATION BY MASS SPECTROMETRY [LARGE SCALE ANALYSIS]</scope>
</reference>
<reference key="17">
    <citation type="journal article" date="2011" name="DNA Repair">
        <title>XRCC4 controls nuclear import and distribution of Ligase IV and exchanges faster at damaged DNA in complex with Ligase IV.</title>
        <authorList>
            <person name="Berg E."/>
            <person name="Christensen M.O."/>
            <person name="Dalla Rosa I."/>
            <person name="Wannagat E."/>
            <person name="Jaenicke R.U."/>
            <person name="Roesner L.M."/>
            <person name="Dirks W.G."/>
            <person name="Boege F."/>
            <person name="Mielke C."/>
        </authorList>
    </citation>
    <scope>SUBCELLULAR LOCATION</scope>
    <scope>INTERACTION WITH XRCC4</scope>
</reference>
<reference key="18">
    <citation type="journal article" date="2014" name="DNA Repair">
        <title>DNA Ligase IV regulates XRCC4 nuclear localization.</title>
        <authorList>
            <person name="Francis D.B."/>
            <person name="Kozlov M."/>
            <person name="Chavez J."/>
            <person name="Chu J."/>
            <person name="Malu S."/>
            <person name="Hanna M."/>
            <person name="Cortes P."/>
        </authorList>
    </citation>
    <scope>FUNCTION</scope>
    <scope>SUBCELLULAR LOCATION</scope>
    <scope>INTERACTION WITH XRCC4</scope>
</reference>
<reference key="19">
    <citation type="journal article" date="2015" name="Biochem. Biophys. Res. Commun.">
        <title>Lysine 271 but not lysine 210 of XRCC4 is required for the nuclear localization of XRCC4 and DNA ligase IV.</title>
        <authorList>
            <person name="Fukuchi M."/>
            <person name="Wanotayan R."/>
            <person name="Liu S."/>
            <person name="Imamichi S."/>
            <person name="Sharma M.K."/>
            <person name="Matsumoto Y."/>
        </authorList>
    </citation>
    <scope>SUBCELLULAR LOCATION</scope>
    <scope>INTERACTION WITH XRCC4</scope>
</reference>
<reference key="20">
    <citation type="journal article" date="2015" name="Cell Death Differ.">
        <title>XLS (c9orf142) is a new component of mammalian DNA double-stranded break repair.</title>
        <authorList>
            <person name="Craxton A."/>
            <person name="Somers J."/>
            <person name="Munnur D."/>
            <person name="Jukes-Jones R."/>
            <person name="Cain K."/>
            <person name="Malewicz M."/>
        </authorList>
    </citation>
    <scope>SUBUNIT</scope>
</reference>
<reference key="21">
    <citation type="journal article" date="2015" name="Nat. Commun.">
        <title>Interactome analysis identifies a new paralogue of XRCC4 in non-homologous end joining DNA repair pathway.</title>
        <authorList>
            <person name="Xing M."/>
            <person name="Yang M."/>
            <person name="Huo W."/>
            <person name="Feng F."/>
            <person name="Wei L."/>
            <person name="Jiang W."/>
            <person name="Ning S."/>
            <person name="Yan Z."/>
            <person name="Li W."/>
            <person name="Wang Q."/>
            <person name="Hou M."/>
            <person name="Dong C."/>
            <person name="Guo R."/>
            <person name="Gao G."/>
            <person name="Ji J."/>
            <person name="Zha S."/>
            <person name="Lan L."/>
            <person name="Liang H."/>
            <person name="Xu D."/>
        </authorList>
    </citation>
    <scope>SUBUNIT</scope>
</reference>
<reference key="22">
    <citation type="journal article" date="2015" name="Science">
        <title>DNA repair. PAXX, a paralog of XRCC4 and XLF, interacts with Ku to promote DNA double-strand break repair.</title>
        <authorList>
            <person name="Ochi T."/>
            <person name="Blackford A.N."/>
            <person name="Coates J."/>
            <person name="Jhujh S."/>
            <person name="Mehmood S."/>
            <person name="Tamura N."/>
            <person name="Travers J."/>
            <person name="Wu Q."/>
            <person name="Draviam V.M."/>
            <person name="Robinson C.V."/>
            <person name="Blundell T.L."/>
            <person name="Jackson S.P."/>
        </authorList>
    </citation>
    <scope>SUBUNIT</scope>
</reference>
<reference key="23">
    <citation type="journal article" date="2001" name="Nat. Struct. Biol.">
        <title>Crystal structure of an Xrcc4-DNA ligase IV complex.</title>
        <authorList>
            <person name="Sibanda B.L."/>
            <person name="Critchlow S.E."/>
            <person name="Begun J."/>
            <person name="Pei X.Y."/>
            <person name="Jackson S.P."/>
            <person name="Blundell T.L."/>
            <person name="Pellegrini L."/>
        </authorList>
    </citation>
    <scope>X-RAY CRYSTALLOGRAPHY (2.3 ANGSTROMS) OF 748-784 IN COMPLEX WITH XRCC4</scope>
    <scope>INTERACTION WITH XRCC4</scope>
</reference>
<reference evidence="43" key="24">
    <citation type="submission" date="2006-12" db="PDB data bank">
        <title>Solution structure of the first BRCT domain of human DNA ligase IV.</title>
        <authorList>
            <consortium name="RIKEN structural genomics initiative (RSGI)"/>
        </authorList>
    </citation>
    <scope>STRUCTURE BY NMR OF 654-759</scope>
</reference>
<reference evidence="44" key="25">
    <citation type="journal article" date="2009" name="Mol. Cell. Biol.">
        <title>Structural and functional interaction between the human DNA repair proteins DNA ligase IV and XRCC4.</title>
        <authorList>
            <person name="Wu P.Y."/>
            <person name="Frit P."/>
            <person name="Meesala S."/>
            <person name="Dauvillier S."/>
            <person name="Modesti M."/>
            <person name="Andres S.N."/>
            <person name="Huang Y."/>
            <person name="Sekiguchi J."/>
            <person name="Calsou P."/>
            <person name="Salles B."/>
            <person name="Junop M.S."/>
        </authorList>
    </citation>
    <scope>X-RAY CRYSTALLOGRAPHY (2.40 ANGSTROMS) OF 654-911 IN COMPLEX WITH XRCC4</scope>
    <scope>INTERACTION WITH XRCC4</scope>
</reference>
<reference evidence="49 50" key="26">
    <citation type="journal article" date="2012" name="Cell Rep.">
        <title>Structural basis of DNA ligase IV-Artemis interaction in nonhomologous end-joining.</title>
        <authorList>
            <person name="De Ioannes P."/>
            <person name="Malu S."/>
            <person name="Cortes P."/>
            <person name="Aggarwal A.K."/>
        </authorList>
    </citation>
    <scope>X-RAY CRYSTALLOGRAPHY (2.25 ANGSTROMS) OF 1-240 IN COMPLEX WITH DCLRE1C</scope>
    <scope>INTERACTION WITH DCLRE1C</scope>
</reference>
<reference evidence="45" key="27">
    <citation type="journal article" date="2012" name="Structure">
        <title>Structural insights into the role of domain flexibility in human DNA ligase IV.</title>
        <authorList>
            <person name="Ochi T."/>
            <person name="Wu Q."/>
            <person name="Chirgadze D.Y."/>
            <person name="Grossmann J.G."/>
            <person name="Bolanos-Garcia V.M."/>
            <person name="Blundell T.L."/>
        </authorList>
    </citation>
    <scope>X-RAY CRYSTALLOGRAPHY (2.90 ANGSTROMS) OF 268-406</scope>
    <scope>INTERACTION WITH XRCC4 AND NHEJ1</scope>
</reference>
<reference evidence="46 47 48" key="28">
    <citation type="journal article" date="2013" name="Structure">
        <title>Structure of the catalytic region of DNA ligase IV in complex with an Artemis fragment sheds light on double-strand break repair.</title>
        <authorList>
            <person name="Ochi T."/>
            <person name="Gu X."/>
            <person name="Blundell T.L."/>
        </authorList>
    </citation>
    <scope>X-RAY CRYSTALLOGRAPHY (2.40 ANGSTROMS) OF 1-609 IN COMPLEX WITH AMP; ATP AND DCLRE1C</scope>
    <scope>FUNCTION</scope>
    <scope>CATALYTIC ACTIVITY</scope>
    <scope>INTERACTION WITH DCLRE1C</scope>
    <scope>ACTIVE SITE</scope>
</reference>
<reference evidence="51 52" key="29">
    <citation type="journal article" date="2018" name="Nat. Commun.">
        <title>Structures of DNA-bound human ligase IV catalytic core reveal insights into substrate binding and catalysis.</title>
        <authorList>
            <person name="Kaminski A.M."/>
            <person name="Tumbale P.P."/>
            <person name="Schellenberg M.J."/>
            <person name="Williams R.S."/>
            <person name="Williams J.G."/>
            <person name="Kunkel T.A."/>
            <person name="Pedersen L.C."/>
            <person name="Bebenek K."/>
        </authorList>
    </citation>
    <scope>X-RAY CRYSTALLOGRAPHY (2.40 ANGSTROMS) OF 1-620 IN COMPLEX WITH DNA</scope>
    <scope>FUNCTION</scope>
    <scope>CATALYTIC ACTIVITY</scope>
    <scope>COFACTOR</scope>
    <scope>ACTIVE SITE</scope>
</reference>
<reference evidence="57 58" key="30">
    <citation type="journal article" date="2021" name="Mol. Cell">
        <title>Cryo-EM of NHEJ supercomplexes provides insights into DNA repair.</title>
        <authorList>
            <person name="Chaplin A.K."/>
            <person name="Hardwick S.W."/>
            <person name="Stavridi A.K."/>
            <person name="Buehl C.J."/>
            <person name="Goff N.J."/>
            <person name="Ropars V."/>
            <person name="Liang S."/>
            <person name="De Oliveira T.M."/>
            <person name="Chirgadze D.Y."/>
            <person name="Meek K."/>
            <person name="Charbonnier J.B."/>
            <person name="Blundell T.L."/>
        </authorList>
    </citation>
    <scope>STRUCTURE BY ELECTRON MICROSCOPY (4.14 ANGSTROMS) IN COMPLEX WITH THE NHEJ COMPLEX AND DNA</scope>
    <scope>IDENTIFICATION IN THE NHEJ COMPLEX</scope>
</reference>
<reference evidence="55 56" key="31">
    <citation type="journal article" date="2021" name="Nature">
        <title>Structural basis of long-range to short-range synaptic transition in NHEJ.</title>
        <authorList>
            <person name="Chen S."/>
            <person name="Lee L."/>
            <person name="Naila T."/>
            <person name="Fishbain S."/>
            <person name="Wang A."/>
            <person name="Tomkinson A.E."/>
            <person name="Lees-Miller S.P."/>
            <person name="He Y."/>
        </authorList>
    </citation>
    <scope>STRUCTURE BY ELECTRON MICROSCOPY (4.6 ANGSTROMS) IN COMPLEX WITH THE NHEJ COMPLEX</scope>
    <scope>IDENTIFICATION IN THE NHEJ COMPLEX</scope>
</reference>
<reference evidence="53 54" key="32">
    <citation type="journal article" date="2021" name="Protein Eng. Des. Sel.">
        <title>Hypomorphic mutations in human DNA ligase IV lead to compromised DNA binding efficiency, hydrophobicity and thermal stability.</title>
        <authorList>
            <person name="Maddi E.R."/>
            <person name="Raghavan S.C."/>
            <person name="Natesh R."/>
        </authorList>
    </citation>
    <scope>X-RAY CRYSTALLOGRAPHY (2.76 ANGSTROMS) OF 1-240 OF MUTANT VAL-3</scope>
    <scope>FUNCTION</scope>
</reference>
<reference key="33">
    <citation type="journal article" date="1999" name="Curr. Biol.">
        <title>Identification of a defect in DNA ligase IV in a radiosensitive leukaemia patient.</title>
        <authorList>
            <person name="Riballo E."/>
            <person name="Critchlow S.E."/>
            <person name="Teo S.-H."/>
            <person name="Doherty A.J."/>
            <person name="Priestley A."/>
            <person name="Broughton B.C."/>
            <person name="Kysela B."/>
            <person name="Beamish H."/>
            <person name="Plowman N."/>
            <person name="Arlett C.F."/>
            <person name="Lehmann A.R."/>
            <person name="Jackson S.P."/>
            <person name="Jeggo P.A."/>
        </authorList>
    </citation>
    <scope>VARIANT LEUKEMIA HIS-278</scope>
</reference>
<reference key="34">
    <citation type="journal article" date="2001" name="J. Biol. Chem.">
        <title>Cellular and biochemical impact of a mutation in DNA ligase IV conferring clinical radiosensitivity.</title>
        <authorList>
            <person name="Riballo E."/>
            <person name="Doherty A.J."/>
            <person name="Dai Y."/>
            <person name="Stiff T."/>
            <person name="Oettinger M.A."/>
            <person name="Jeggo P.A."/>
            <person name="Kysela B."/>
        </authorList>
    </citation>
    <scope>CHARACTERIZATION OF VARIANT HIS-278</scope>
</reference>
<reference key="35">
    <citation type="journal article" date="2001" name="Mol. Cell">
        <title>DNA ligase IV mutations identified in patients exhibiting developmental delay and immunodeficiency.</title>
        <authorList>
            <person name="O'Driscoll M."/>
            <person name="Cerosaletti K.M."/>
            <person name="Girard P.-M."/>
            <person name="Dai Y."/>
            <person name="Stumm M."/>
            <person name="Kysela B."/>
            <person name="Hirsch B."/>
            <person name="Gennery A."/>
            <person name="Palmer S.E."/>
            <person name="Seidel J."/>
            <person name="Gatti R.A."/>
            <person name="Varon R."/>
            <person name="Oettinger M.A."/>
            <person name="Neitzel H."/>
            <person name="Jeggo P.A."/>
            <person name="Concannon P."/>
        </authorList>
    </citation>
    <scope>VARIANTS LIG4S HIS-278; GLU-469; 580-ARG--ILE-911 DEL AND 814-ARG--ILE-911 DEL</scope>
</reference>
<reference key="36">
    <citation type="journal article" date="2002" name="J. Med. Genet.">
        <title>Genetic variants of NHEJ DNA ligase IV can affect the risk of developing multiple myeloma, a tumour characterised by aberrant class switch recombination.</title>
        <authorList>
            <person name="Roddam P.L."/>
            <person name="Rollinson S."/>
            <person name="O'Driscoll M."/>
            <person name="Jeggo P.A."/>
            <person name="Jack A."/>
            <person name="Morgan G.J."/>
        </authorList>
    </citation>
    <scope>VARIANTS VAL-3 AND ILE-9</scope>
</reference>
<reference key="37">
    <citation type="journal article" date="2006" name="J. Clin. Invest.">
        <title>A new type of radiosensitive T-B-NK(+) severe combined immunodeficiency caused by a LIG4 mutation.</title>
        <authorList>
            <person name="van der Burg M."/>
            <person name="van Veelen L.R."/>
            <person name="Verkaik N.S."/>
            <person name="Wiegant W.W."/>
            <person name="Hartwig N.G."/>
            <person name="Barendregt B.H."/>
            <person name="Brugmans L."/>
            <person name="Raams A."/>
            <person name="Jaspers N.G.J."/>
            <person name="Zdzienicka M.Z."/>
            <person name="van Dongen J.J.M."/>
            <person name="van Gent D.C."/>
        </authorList>
    </citation>
    <scope>VARIANT RSSCID GLN-433 DEL</scope>
</reference>
<reference key="38">
    <citation type="journal article" date="2015" name="Am. J. Hum. Genet.">
        <title>Mutations in the NHEJ component XRCC4 cause primordial dwarfism.</title>
        <authorList>
            <person name="Murray J.E."/>
            <person name="van der Burg M."/>
            <person name="Ijspeert H."/>
            <person name="Carroll P."/>
            <person name="Wu Q."/>
            <person name="Ochi T."/>
            <person name="Leitch A."/>
            <person name="Miller E.S."/>
            <person name="Kysela B."/>
            <person name="Jawad A."/>
            <person name="Bottani A."/>
            <person name="Brancati F."/>
            <person name="Cappa M."/>
            <person name="Cormier-Daire V."/>
            <person name="Deshpande C."/>
            <person name="Faqeih E.A."/>
            <person name="Graham G.E."/>
            <person name="Ranza E."/>
            <person name="Blundell T.L."/>
            <person name="Jackson A.P."/>
            <person name="Stewart G.S."/>
            <person name="Bicknell L.S."/>
        </authorList>
    </citation>
    <scope>VARIANT PRO-774</scope>
</reference>
<accession>P49917</accession>
<accession>Q8IY66</accession>
<accession>Q8TEU5</accession>
<organism>
    <name type="scientific">Homo sapiens</name>
    <name type="common">Human</name>
    <dbReference type="NCBI Taxonomy" id="9606"/>
    <lineage>
        <taxon>Eukaryota</taxon>
        <taxon>Metazoa</taxon>
        <taxon>Chordata</taxon>
        <taxon>Craniata</taxon>
        <taxon>Vertebrata</taxon>
        <taxon>Euteleostomi</taxon>
        <taxon>Mammalia</taxon>
        <taxon>Eutheria</taxon>
        <taxon>Euarchontoglires</taxon>
        <taxon>Primates</taxon>
        <taxon>Haplorrhini</taxon>
        <taxon>Catarrhini</taxon>
        <taxon>Hominidae</taxon>
        <taxon>Homo</taxon>
    </lineage>
</organism>
<proteinExistence type="evidence at protein level"/>
<sequence length="911" mass="103971">MAASQTSQTVASHVPFADLCSTLERIQKSKGRAEKIRHFREFLDSWRKFHDALHKNHKDVTDSFYPAMRLILPQLERERMAYGIKETMLAKLYIELLNLPRDGKDALKLLNYRTPTGTHGDAGDFAMIAYFVLKPRCLQKGSLTIQQVNDLLDSIASNNSAKRKDLIKKSLLQLITQSSALEQKWLIRMIIKDLKLGVSQQTIFSVFHNDAAELHNVTTDLEKVCRQLHDPSVGLSDISITLFSAFKPMLAAIADIEHIEKDMKHQSFYIETKLDGERMQMHKDGDVYKYFSRNGYNYTDQFGASPTEGSLTPFIHNAFKADIQICILDGEMMAYNPNTQTFMQKGTKFDIKRMVEDSDLQTCYCVFDVLMVNNKKLGHETLRKRYEILSSIFTPIPGRIEIVQKTQAHTKNEVIDALNEAIDKREEGIMVKQPLSIYKPDKRGEGWLKIKPEYVSGLMDELDILIVGGYWGKGSRGGMMSHFLCAVAEKPPPGEKPSVFHTLSRVGSGCTMKELYDLGLKLAKYWKPFHRKAPPSSILCGTEKPEVYIEPCNSVIVQIKAAEIVPSDMYKTGCTLRFPRIEKIRDDKEWHECMTLDDLEQLRGKASGKLASKHLYIGGDDEPQEKKRKAAPKMKKVIGIIEHLKAPNLTNVNKISNIFEDVEFCVMSGTDSQPKPDLENRIAEFGGYIVQNPGPDTYCVIAGSENIRVKNIILSNKHDVVKPAWLLECFKTKSFVPWQPRFMIHMCPSTKEHFAREYDCYGDSYFIDTDLNQLKEVFSGIKNSNEQTPEEMASLIADLEYRYSWDCSPLSMFRRHTVYLDSYAVINDLSTKNEGTRLAIKALELRFHGAKVVSCLAEGVSHVIIGEDHSRVADFKAFRRTFKRKFKILKESWVTDSIDKCELQEENQYLI</sequence>
<feature type="chain" id="PRO_0000059576" description="DNA ligase 4">
    <location>
        <begin position="1"/>
        <end position="911"/>
    </location>
</feature>
<feature type="domain" description="BRCT 1" evidence="3">
    <location>
        <begin position="654"/>
        <end position="743"/>
    </location>
</feature>
<feature type="domain" description="BRCT 2" evidence="3">
    <location>
        <begin position="808"/>
        <end position="911"/>
    </location>
</feature>
<feature type="region of interest" description="Required for catalytic activity" evidence="22">
    <location>
        <begin position="610"/>
        <end position="620"/>
    </location>
</feature>
<feature type="active site" description="N6-AMP-lysine intermediate" evidence="4 22 29 46">
    <location>
        <position position="273"/>
    </location>
</feature>
<feature type="binding site" evidence="1">
    <location>
        <position position="271"/>
    </location>
    <ligand>
        <name>ATP</name>
        <dbReference type="ChEBI" id="CHEBI:30616"/>
    </ligand>
</feature>
<feature type="binding site" evidence="22 47 48">
    <location>
        <position position="272"/>
    </location>
    <ligand>
        <name>ATP</name>
        <dbReference type="ChEBI" id="CHEBI:30616"/>
    </ligand>
</feature>
<feature type="binding site" evidence="22 47 48">
    <location>
        <position position="273"/>
    </location>
    <ligand>
        <name>ATP</name>
        <dbReference type="ChEBI" id="CHEBI:30616"/>
    </ligand>
</feature>
<feature type="binding site" evidence="22 47 48">
    <location>
        <position position="274"/>
    </location>
    <ligand>
        <name>ATP</name>
        <dbReference type="ChEBI" id="CHEBI:30616"/>
    </ligand>
</feature>
<feature type="binding site" evidence="22 48">
    <location>
        <position position="278"/>
    </location>
    <ligand>
        <name>ATP</name>
        <dbReference type="ChEBI" id="CHEBI:30616"/>
    </ligand>
</feature>
<feature type="binding site" evidence="22 47">
    <location>
        <position position="331"/>
    </location>
    <ligand>
        <name>ATP</name>
        <dbReference type="ChEBI" id="CHEBI:30616"/>
    </ligand>
</feature>
<feature type="binding site" evidence="2">
    <location>
        <position position="331"/>
    </location>
    <ligand>
        <name>Mg(2+)</name>
        <dbReference type="ChEBI" id="CHEBI:18420"/>
        <label>1</label>
    </ligand>
</feature>
<feature type="binding site" evidence="22 48">
    <location>
        <position position="345"/>
    </location>
    <ligand>
        <name>ATP</name>
        <dbReference type="ChEBI" id="CHEBI:30616"/>
    </ligand>
</feature>
<feature type="binding site" evidence="22 48">
    <location>
        <position position="367"/>
    </location>
    <ligand>
        <name>ATP</name>
        <dbReference type="ChEBI" id="CHEBI:30616"/>
    </ligand>
</feature>
<feature type="binding site" evidence="22 47">
    <location>
        <position position="427"/>
    </location>
    <ligand>
        <name>ATP</name>
        <dbReference type="ChEBI" id="CHEBI:30616"/>
    </ligand>
</feature>
<feature type="binding site" evidence="2">
    <location>
        <position position="427"/>
    </location>
    <ligand>
        <name>Mg(2+)</name>
        <dbReference type="ChEBI" id="CHEBI:18420"/>
        <label>2</label>
    </ligand>
</feature>
<feature type="binding site" evidence="22 48">
    <location>
        <position position="432"/>
    </location>
    <ligand>
        <name>ATP</name>
        <dbReference type="ChEBI" id="CHEBI:30616"/>
    </ligand>
</feature>
<feature type="binding site" evidence="22 47 48">
    <location>
        <position position="449"/>
    </location>
    <ligand>
        <name>ATP</name>
        <dbReference type="ChEBI" id="CHEBI:30616"/>
    </ligand>
</feature>
<feature type="binding site" evidence="22 47 48">
    <location>
        <position position="451"/>
    </location>
    <ligand>
        <name>ATP</name>
        <dbReference type="ChEBI" id="CHEBI:30616"/>
    </ligand>
</feature>
<feature type="sequence variant" id="VAR_029352" description="In dbSNP:rs1805389." evidence="10">
    <original>A</original>
    <variation>V</variation>
    <location>
        <position position="3"/>
    </location>
</feature>
<feature type="sequence variant" id="VAR_033884" description="In dbSNP:rs1805388." evidence="10">
    <original>T</original>
    <variation>I</variation>
    <location>
        <position position="9"/>
    </location>
</feature>
<feature type="sequence variant" id="VAR_029353" description="In dbSNP:rs3093763.">
    <original>D</original>
    <variation>H</variation>
    <location>
        <position position="62"/>
    </location>
</feature>
<feature type="sequence variant" id="VAR_018808" description="In dbSNP:rs3093765." evidence="38">
    <original>P</original>
    <variation>S</variation>
    <location>
        <position position="231"/>
    </location>
</feature>
<feature type="sequence variant" id="VAR_012774" description="In LIG4S and leukemia; impairs activity; dbSNP:rs104894421." evidence="5 7 9">
    <original>R</original>
    <variation>H</variation>
    <location>
        <position position="278"/>
    </location>
</feature>
<feature type="sequence variant" id="VAR_044123" description="In RSSCID." evidence="13">
    <location>
        <position position="433"/>
    </location>
</feature>
<feature type="sequence variant" id="VAR_044124" description="In dbSNP:rs2232640.">
    <original>E</original>
    <variation>G</variation>
    <location>
        <position position="461"/>
    </location>
</feature>
<feature type="sequence variant" id="VAR_012775" description="In LIG4S; dbSNP:rs104894420." evidence="9">
    <original>G</original>
    <variation>E</variation>
    <location>
        <position position="469"/>
    </location>
</feature>
<feature type="sequence variant" id="VAR_016771" description="In dbSNP:rs3742212.">
    <original>L</original>
    <variation>F</variation>
    <location>
        <position position="539"/>
    </location>
</feature>
<feature type="sequence variant" id="VAR_084970" description="In LIG4S." evidence="9">
    <location>
        <begin position="580"/>
        <end position="911"/>
    </location>
</feature>
<feature type="sequence variant" id="VAR_016772" description="In dbSNP:rs2232641.">
    <original>I</original>
    <variation>V</variation>
    <location>
        <position position="658"/>
    </location>
</feature>
<feature type="sequence variant" id="VAR_075826" description="Found in a patient with microcephalic primordial dwarfism; uncertain significance; dbSNP:rs1060499662." evidence="26">
    <original>L</original>
    <variation>P</variation>
    <location>
        <position position="774"/>
    </location>
</feature>
<feature type="sequence variant" id="VAR_084971" description="In LIG4S." evidence="9">
    <location>
        <begin position="814"/>
        <end position="911"/>
    </location>
</feature>
<feature type="sequence variant" id="VAR_016773" description="In dbSNP:rs2232642." evidence="38">
    <original>A</original>
    <variation>T</variation>
    <location>
        <position position="857"/>
    </location>
</feature>
<feature type="sequence conflict" description="In Ref. 1; CAA58467." evidence="41" ref="1">
    <original>F</original>
    <variation>S</variation>
    <location>
        <position position="246"/>
    </location>
</feature>
<feature type="helix" evidence="64">
    <location>
        <begin position="10"/>
        <end position="12"/>
    </location>
</feature>
<feature type="helix" evidence="64">
    <location>
        <begin position="16"/>
        <end position="28"/>
    </location>
</feature>
<feature type="helix" evidence="64">
    <location>
        <begin position="32"/>
        <end position="53"/>
    </location>
</feature>
<feature type="turn" evidence="64">
    <location>
        <begin position="54"/>
        <end position="56"/>
    </location>
</feature>
<feature type="helix" evidence="64">
    <location>
        <begin position="65"/>
        <end position="71"/>
    </location>
</feature>
<feature type="helix" evidence="64">
    <location>
        <begin position="73"/>
        <end position="75"/>
    </location>
</feature>
<feature type="helix" evidence="64">
    <location>
        <begin position="86"/>
        <end position="96"/>
    </location>
</feature>
<feature type="helix" evidence="64">
    <location>
        <begin position="104"/>
        <end position="110"/>
    </location>
</feature>
<feature type="turn" evidence="66">
    <location>
        <begin position="111"/>
        <end position="113"/>
    </location>
</feature>
<feature type="helix" evidence="64">
    <location>
        <begin position="125"/>
        <end position="133"/>
    </location>
</feature>
<feature type="turn" evidence="63">
    <location>
        <begin position="134"/>
        <end position="136"/>
    </location>
</feature>
<feature type="helix" evidence="64">
    <location>
        <begin position="145"/>
        <end position="160"/>
    </location>
</feature>
<feature type="helix" evidence="64">
    <location>
        <begin position="164"/>
        <end position="176"/>
    </location>
</feature>
<feature type="helix" evidence="64">
    <location>
        <begin position="180"/>
        <end position="191"/>
    </location>
</feature>
<feature type="helix" evidence="64">
    <location>
        <begin position="200"/>
        <end position="207"/>
    </location>
</feature>
<feature type="helix" evidence="64">
    <location>
        <begin position="211"/>
        <end position="218"/>
    </location>
</feature>
<feature type="helix" evidence="64">
    <location>
        <begin position="221"/>
        <end position="227"/>
    </location>
</feature>
<feature type="strand" evidence="65">
    <location>
        <begin position="230"/>
        <end position="232"/>
    </location>
</feature>
<feature type="strand" evidence="63">
    <location>
        <begin position="250"/>
        <end position="253"/>
    </location>
</feature>
<feature type="helix" evidence="63">
    <location>
        <begin position="256"/>
        <end position="258"/>
    </location>
</feature>
<feature type="helix" evidence="63">
    <location>
        <begin position="259"/>
        <end position="262"/>
    </location>
</feature>
<feature type="turn" evidence="63">
    <location>
        <begin position="263"/>
        <end position="265"/>
    </location>
</feature>
<feature type="strand" evidence="63">
    <location>
        <begin position="268"/>
        <end position="272"/>
    </location>
</feature>
<feature type="strand" evidence="63">
    <location>
        <begin position="276"/>
        <end position="284"/>
    </location>
</feature>
<feature type="strand" evidence="63">
    <location>
        <begin position="287"/>
        <end position="292"/>
    </location>
</feature>
<feature type="helix" evidence="63">
    <location>
        <begin position="299"/>
        <end position="302"/>
    </location>
</feature>
<feature type="strand" evidence="63">
    <location>
        <begin position="308"/>
        <end position="311"/>
    </location>
</feature>
<feature type="helix" evidence="63">
    <location>
        <begin position="312"/>
        <end position="315"/>
    </location>
</feature>
<feature type="helix" evidence="63">
    <location>
        <begin position="316"/>
        <end position="318"/>
    </location>
</feature>
<feature type="strand" evidence="63">
    <location>
        <begin position="324"/>
        <end position="336"/>
    </location>
</feature>
<feature type="turn" evidence="63">
    <location>
        <begin position="337"/>
        <end position="340"/>
    </location>
</feature>
<feature type="strand" evidence="63">
    <location>
        <begin position="341"/>
        <end position="343"/>
    </location>
</feature>
<feature type="helix" evidence="63">
    <location>
        <begin position="351"/>
        <end position="356"/>
    </location>
</feature>
<feature type="strand" evidence="63">
    <location>
        <begin position="359"/>
        <end position="372"/>
    </location>
</feature>
<feature type="strand" evidence="62">
    <location>
        <begin position="378"/>
        <end position="380"/>
    </location>
</feature>
<feature type="helix" evidence="63">
    <location>
        <begin position="382"/>
        <end position="392"/>
    </location>
</feature>
<feature type="turn" evidence="63">
    <location>
        <begin position="397"/>
        <end position="399"/>
    </location>
</feature>
<feature type="strand" evidence="63">
    <location>
        <begin position="400"/>
        <end position="402"/>
    </location>
</feature>
<feature type="strand" evidence="63">
    <location>
        <begin position="405"/>
        <end position="408"/>
    </location>
</feature>
<feature type="helix" evidence="63">
    <location>
        <begin position="411"/>
        <end position="423"/>
    </location>
</feature>
<feature type="strand" evidence="63">
    <location>
        <begin position="429"/>
        <end position="432"/>
    </location>
</feature>
<feature type="strand" evidence="63">
    <location>
        <begin position="443"/>
        <end position="450"/>
    </location>
</feature>
<feature type="helix" evidence="66">
    <location>
        <begin position="452"/>
        <end position="454"/>
    </location>
</feature>
<feature type="helix" evidence="63">
    <location>
        <begin position="458"/>
        <end position="460"/>
    </location>
</feature>
<feature type="strand" evidence="63">
    <location>
        <begin position="462"/>
        <end position="471"/>
    </location>
</feature>
<feature type="helix" evidence="63">
    <location>
        <begin position="474"/>
        <end position="478"/>
    </location>
</feature>
<feature type="strand" evidence="63">
    <location>
        <begin position="479"/>
        <end position="488"/>
    </location>
</feature>
<feature type="strand" evidence="63">
    <location>
        <begin position="500"/>
        <end position="507"/>
    </location>
</feature>
<feature type="helix" evidence="63">
    <location>
        <begin position="513"/>
        <end position="522"/>
    </location>
</feature>
<feature type="helix" evidence="63">
    <location>
        <begin position="523"/>
        <end position="525"/>
    </location>
</feature>
<feature type="strand" evidence="66">
    <location>
        <begin position="536"/>
        <end position="539"/>
    </location>
</feature>
<feature type="strand" evidence="63">
    <location>
        <begin position="546"/>
        <end position="548"/>
    </location>
</feature>
<feature type="helix" evidence="63">
    <location>
        <begin position="551"/>
        <end position="553"/>
    </location>
</feature>
<feature type="strand" evidence="63">
    <location>
        <begin position="556"/>
        <end position="560"/>
    </location>
</feature>
<feature type="strand" evidence="63">
    <location>
        <begin position="562"/>
        <end position="566"/>
    </location>
</feature>
<feature type="strand" evidence="63">
    <location>
        <begin position="568"/>
        <end position="570"/>
    </location>
</feature>
<feature type="strand" evidence="63">
    <location>
        <begin position="573"/>
        <end position="578"/>
    </location>
</feature>
<feature type="strand" evidence="63">
    <location>
        <begin position="580"/>
        <end position="584"/>
    </location>
</feature>
<feature type="strand" evidence="65">
    <location>
        <begin position="586"/>
        <end position="588"/>
    </location>
</feature>
<feature type="helix" evidence="63">
    <location>
        <begin position="590"/>
        <end position="592"/>
    </location>
</feature>
<feature type="helix" evidence="63">
    <location>
        <begin position="596"/>
        <end position="603"/>
    </location>
</feature>
<feature type="turn" evidence="66">
    <location>
        <begin position="606"/>
        <end position="608"/>
    </location>
</feature>
<feature type="strand" evidence="66">
    <location>
        <begin position="609"/>
        <end position="611"/>
    </location>
</feature>
<feature type="turn" evidence="61">
    <location>
        <begin position="658"/>
        <end position="661"/>
    </location>
</feature>
<feature type="strand" evidence="61">
    <location>
        <begin position="663"/>
        <end position="666"/>
    </location>
</feature>
<feature type="strand" evidence="60">
    <location>
        <begin position="671"/>
        <end position="673"/>
    </location>
</feature>
<feature type="helix" evidence="61">
    <location>
        <begin position="675"/>
        <end position="684"/>
    </location>
</feature>
<feature type="strand" evidence="60">
    <location>
        <begin position="687"/>
        <end position="692"/>
    </location>
</feature>
<feature type="strand" evidence="61">
    <location>
        <begin position="697"/>
        <end position="701"/>
    </location>
</feature>
<feature type="helix" evidence="61">
    <location>
        <begin position="707"/>
        <end position="714"/>
    </location>
</feature>
<feature type="helix" evidence="61">
    <location>
        <begin position="723"/>
        <end position="732"/>
    </location>
</feature>
<feature type="helix" evidence="61">
    <location>
        <begin position="740"/>
        <end position="742"/>
    </location>
</feature>
<feature type="strand" evidence="61">
    <location>
        <begin position="743"/>
        <end position="745"/>
    </location>
</feature>
<feature type="helix" evidence="61">
    <location>
        <begin position="748"/>
        <end position="753"/>
    </location>
</feature>
<feature type="turn" evidence="61">
    <location>
        <begin position="754"/>
        <end position="757"/>
    </location>
</feature>
<feature type="strand" evidence="59">
    <location>
        <begin position="764"/>
        <end position="767"/>
    </location>
</feature>
<feature type="helix" evidence="59">
    <location>
        <begin position="771"/>
        <end position="779"/>
    </location>
</feature>
<feature type="helix" evidence="61">
    <location>
        <begin position="789"/>
        <end position="802"/>
    </location>
</feature>
<feature type="helix" evidence="61">
    <location>
        <begin position="809"/>
        <end position="811"/>
    </location>
</feature>
<feature type="turn" evidence="61">
    <location>
        <begin position="812"/>
        <end position="815"/>
    </location>
</feature>
<feature type="strand" evidence="61">
    <location>
        <begin position="817"/>
        <end position="820"/>
    </location>
</feature>
<feature type="strand" evidence="61">
    <location>
        <begin position="823"/>
        <end position="825"/>
    </location>
</feature>
<feature type="helix" evidence="61">
    <location>
        <begin position="829"/>
        <end position="831"/>
    </location>
</feature>
<feature type="helix" evidence="61">
    <location>
        <begin position="837"/>
        <end position="847"/>
    </location>
</feature>
<feature type="strand" evidence="61">
    <location>
        <begin position="851"/>
        <end position="855"/>
    </location>
</feature>
<feature type="strand" evidence="61">
    <location>
        <begin position="862"/>
        <end position="865"/>
    </location>
</feature>
<feature type="helix" evidence="61">
    <location>
        <begin position="872"/>
        <end position="880"/>
    </location>
</feature>
<feature type="strand" evidence="61">
    <location>
        <begin position="887"/>
        <end position="890"/>
    </location>
</feature>
<feature type="helix" evidence="61">
    <location>
        <begin position="892"/>
        <end position="899"/>
    </location>
</feature>
<feature type="helix" evidence="61">
    <location>
        <begin position="906"/>
        <end position="908"/>
    </location>
</feature>
<name>DNLI4_HUMAN</name>
<comment type="function">
    <text evidence="6 11 14 22 23 29 30 34 35 37">DNA ligase involved in DNA non-homologous end joining (NHEJ); required for double-strand break (DSB) repair and V(D)J recombination (PubMed:12517771, PubMed:17290226, PubMed:23523427, PubMed:29980672, PubMed:33586762, PubMed:8798671, PubMed:9242410, PubMed:9809069). Catalyzes the NHEJ ligation step of the broken DNA during DSB repair by resealing the DNA breaks after the gap filling is completed (PubMed:12517771, PubMed:17290226, PubMed:9242410, PubMed:9809069). Joins single-strand breaks in a double-stranded polydeoxynucleotide in an ATP-dependent reaction (PubMed:12517771, PubMed:17290226, PubMed:9242410, PubMed:9809069). LIG4 is mechanistically flexible: it can ligate nicks as well as compatible DNA overhangs alone, while in the presence of XRCC4, it can ligate ends with 2-nucleotides (nt) microhomology and 1-nt gaps (PubMed:17290226). Forms a subcomplex with XRCC4; the LIG4-XRCC4 subcomplex is responsible for the NHEJ ligation step and XRCC4 enhances the joining activity of LIG4 (PubMed:9242410, PubMed:9809069). Binding of the LIG4-XRCC4 complex to DNA ends is dependent on the assembly of the DNA-dependent protein kinase complex DNA-PK to these DNA ends (PubMed:10854421). LIG4 regulates nuclear localization of XRCC4 (PubMed:24984242).</text>
</comment>
<comment type="catalytic activity">
    <reaction evidence="4 22 29 37">
        <text>ATP + (deoxyribonucleotide)n-3'-hydroxyl + 5'-phospho-(deoxyribonucleotide)m = (deoxyribonucleotide)n+m + AMP + diphosphate.</text>
        <dbReference type="EC" id="6.5.1.1"/>
    </reaction>
</comment>
<comment type="cofactor">
    <cofactor evidence="29">
        <name>Mg(2+)</name>
        <dbReference type="ChEBI" id="CHEBI:18420"/>
    </cofactor>
    <text evidence="29">Can also use manganese, calcium, nickel and cobalt ions in the ligation reaction.</text>
</comment>
<comment type="subunit">
    <text evidence="6 8 11 12 14 15 16 17 18 19 20 21 22 23 24 25 27 28 31 32 36 37">Interacts with XRCC4; the LIG4-XRCC4 subcomplex has a 1:2 stoichiometry and XRCC4 is required for LIG4 stability (PubMed:10854421, PubMed:11702069, PubMed:12517771, PubMed:17290226, PubMed:19332554, PubMed:19837014, PubMed:21982441, PubMed:22658747, PubMed:24984242, PubMed:25934149, PubMed:9259561, PubMed:9809069, PubMed:17567543). Component of the core long-range non-homologous end joining (NHEJ) complex (also named DNA-PK complex) composed of PRKDC, LIG4, XRCC4, XRCC6/Ku70, XRCC5/Ku86 and NHEJ1/XLF (PubMed:12547193, PubMed:22658747, PubMed:25670504, PubMed:33854234, PubMed:34352203, PubMed:17567543). Additional component of the NHEJ complex includes PAXX (PubMed:25574025, PubMed:25941166). Following autophosphorylation, PRKDC dissociates from DNA, leading to formation of the short-range NHEJ complex, composed of LIG4, XRCC4, XRCC6/Ku70, XRCC5/Ku86 and NHEJ1/XLF (PubMed:33854234). Interacts with DCLRE1C; the interaction is direct (PubMed:23219551, PubMed:23523427). Interacts with APLF (PubMed:17396150).</text>
</comment>
<comment type="interaction">
    <interactant intactId="EBI-847896">
        <id>P49917</id>
    </interactant>
    <interactant intactId="EBI-1256044">
        <id>Q8IW19</id>
        <label>APLF</label>
    </interactant>
    <organismsDiffer>false</organismsDiffer>
    <experiments>4</experiments>
</comment>
<comment type="interaction">
    <interactant intactId="EBI-847896">
        <id>P49917</id>
    </interactant>
    <interactant intactId="EBI-11694104">
        <id>Q96SD1</id>
        <label>DCLRE1C</label>
    </interactant>
    <organismsDiffer>false</organismsDiffer>
    <experiments>16</experiments>
</comment>
<comment type="interaction">
    <interactant intactId="EBI-847896">
        <id>P49917</id>
    </interactant>
    <interactant intactId="EBI-847807">
        <id>Q9H9Q4</id>
        <label>NHEJ1</label>
    </interactant>
    <organismsDiffer>false</organismsDiffer>
    <experiments>5</experiments>
</comment>
<comment type="interaction">
    <interactant intactId="EBI-847896">
        <id>P49917</id>
    </interactant>
    <interactant intactId="EBI-717592">
        <id>Q13426</id>
        <label>XRCC4</label>
    </interactant>
    <organismsDiffer>false</organismsDiffer>
    <experiments>22</experiments>
</comment>
<comment type="interaction">
    <interactant intactId="EBI-847896">
        <id>P49917</id>
    </interactant>
    <interactant intactId="EBI-15891375">
        <id>Q13426-2</id>
        <label>XRCC4</label>
    </interactant>
    <organismsDiffer>false</organismsDiffer>
    <experiments>11</experiments>
</comment>
<comment type="subcellular location">
    <subcellularLocation>
        <location evidence="19 23 27 34">Nucleus</location>
    </subcellularLocation>
</comment>
<comment type="tissue specificity">
    <text evidence="33">Testis, thymus, prostate and heart.</text>
</comment>
<comment type="disease" evidence="9">
    <disease id="DI-01906">
        <name>LIG4 syndrome</name>
        <acronym>LIG4S</acronym>
        <description>Characterized by immunodeficiency and developmental and growth delay. Patients display unusual facial features, microcephaly, growth and/or developmental delay, pancytopenia, and various skin abnormalities.</description>
        <dbReference type="MIM" id="606593"/>
    </disease>
    <text>The disease is caused by variants affecting the gene represented in this entry.</text>
</comment>
<comment type="disease" evidence="13">
    <disease id="DI-01020">
        <name>Severe combined immunodeficiency autosomal recessive T-cell-negative/B-cell-negative/NK-cell-positive with sensitivity to ionizing radiation</name>
        <acronym>RSSCID</acronym>
        <description>A form of severe combined immunodeficiency, a genetically and clinically heterogeneous group of rare congenital disorders characterized by impairment of both humoral and cell-mediated immunity, leukopenia, and low or absent antibody levels. Patients present in infancy with recurrent, persistent infections by opportunistic organisms. The common characteristic of all types of SCID is absence of T-cell-mediated cellular immunity due to a defect in T-cell development. Individuals affected by RS-SCID show defects in the DNA repair machinery necessary for coding joint formation and the completion of V(D)J recombination. A subset of cells from such patients show increased radiosensitivity.</description>
        <dbReference type="MIM" id="602450"/>
    </disease>
    <text>The disease is caused by variants affecting the gene represented in this entry.</text>
</comment>
<comment type="similarity">
    <text evidence="41">Belongs to the ATP-dependent DNA ligase family.</text>
</comment>
<comment type="sequence caution" evidence="41">
    <conflict type="erroneous initiation">
        <sequence resource="EMBL-CDS" id="AAL77435"/>
    </conflict>
</comment>
<comment type="sequence caution" evidence="41">
    <conflict type="erroneous initiation">
        <sequence resource="EMBL-CDS" id="CAA58467"/>
    </conflict>
</comment>
<comment type="online information" name="LIG4base">
    <link uri="https://databases.lovd.nl/shared/genes/LIG4"/>
    <text>LIG4 mutation db</text>
</comment>
<comment type="online information" name="Wikipedia">
    <link uri="https://en.wikipedia.org/wiki/DNA_ligase"/>
    <text>DNA ligase entry</text>
</comment>
<gene>
    <name evidence="39 42" type="primary">LIG4</name>
</gene>
<protein>
    <recommendedName>
        <fullName evidence="41">DNA ligase 4</fullName>
        <ecNumber evidence="4 22 29 37">6.5.1.1</ecNumber>
    </recommendedName>
    <alternativeName>
        <fullName evidence="40">DNA ligase IV</fullName>
    </alternativeName>
    <alternativeName>
        <fullName>Polydeoxyribonucleotide synthase [ATP] 4</fullName>
    </alternativeName>
</protein>
<evidence type="ECO:0000250" key="1">
    <source>
        <dbReference type="UniProtKB" id="P18858"/>
    </source>
</evidence>
<evidence type="ECO:0000255" key="2"/>
<evidence type="ECO:0000255" key="3">
    <source>
        <dbReference type="PROSITE-ProRule" id="PRU00033"/>
    </source>
</evidence>
<evidence type="ECO:0000255" key="4">
    <source>
        <dbReference type="PROSITE-ProRule" id="PRU10135"/>
    </source>
</evidence>
<evidence type="ECO:0000269" key="5">
    <source>
    </source>
</evidence>
<evidence type="ECO:0000269" key="6">
    <source>
    </source>
</evidence>
<evidence type="ECO:0000269" key="7">
    <source>
    </source>
</evidence>
<evidence type="ECO:0000269" key="8">
    <source>
    </source>
</evidence>
<evidence type="ECO:0000269" key="9">
    <source>
    </source>
</evidence>
<evidence type="ECO:0000269" key="10">
    <source>
    </source>
</evidence>
<evidence type="ECO:0000269" key="11">
    <source>
    </source>
</evidence>
<evidence type="ECO:0000269" key="12">
    <source>
    </source>
</evidence>
<evidence type="ECO:0000269" key="13">
    <source>
    </source>
</evidence>
<evidence type="ECO:0000269" key="14">
    <source>
    </source>
</evidence>
<evidence type="ECO:0000269" key="15">
    <source>
    </source>
</evidence>
<evidence type="ECO:0000269" key="16">
    <source>
    </source>
</evidence>
<evidence type="ECO:0000269" key="17">
    <source>
    </source>
</evidence>
<evidence type="ECO:0000269" key="18">
    <source>
    </source>
</evidence>
<evidence type="ECO:0000269" key="19">
    <source>
    </source>
</evidence>
<evidence type="ECO:0000269" key="20">
    <source>
    </source>
</evidence>
<evidence type="ECO:0000269" key="21">
    <source>
    </source>
</evidence>
<evidence type="ECO:0000269" key="22">
    <source>
    </source>
</evidence>
<evidence type="ECO:0000269" key="23">
    <source>
    </source>
</evidence>
<evidence type="ECO:0000269" key="24">
    <source>
    </source>
</evidence>
<evidence type="ECO:0000269" key="25">
    <source>
    </source>
</evidence>
<evidence type="ECO:0000269" key="26">
    <source>
    </source>
</evidence>
<evidence type="ECO:0000269" key="27">
    <source>
    </source>
</evidence>
<evidence type="ECO:0000269" key="28">
    <source>
    </source>
</evidence>
<evidence type="ECO:0000269" key="29">
    <source>
    </source>
</evidence>
<evidence type="ECO:0000269" key="30">
    <source>
    </source>
</evidence>
<evidence type="ECO:0000269" key="31">
    <source>
    </source>
</evidence>
<evidence type="ECO:0000269" key="32">
    <source>
    </source>
</evidence>
<evidence type="ECO:0000269" key="33">
    <source>
    </source>
</evidence>
<evidence type="ECO:0000269" key="34">
    <source>
    </source>
</evidence>
<evidence type="ECO:0000269" key="35">
    <source>
    </source>
</evidence>
<evidence type="ECO:0000269" key="36">
    <source>
    </source>
</evidence>
<evidence type="ECO:0000269" key="37">
    <source>
    </source>
</evidence>
<evidence type="ECO:0000269" key="38">
    <source ref="2"/>
</evidence>
<evidence type="ECO:0000303" key="39">
    <source>
    </source>
</evidence>
<evidence type="ECO:0000303" key="40">
    <source>
    </source>
</evidence>
<evidence type="ECO:0000305" key="41"/>
<evidence type="ECO:0000312" key="42">
    <source>
        <dbReference type="HGNC" id="HGNC:6601"/>
    </source>
</evidence>
<evidence type="ECO:0007744" key="43">
    <source>
        <dbReference type="PDB" id="2E2W"/>
    </source>
</evidence>
<evidence type="ECO:0007744" key="44">
    <source>
        <dbReference type="PDB" id="3II6"/>
    </source>
</evidence>
<evidence type="ECO:0007744" key="45">
    <source>
        <dbReference type="PDB" id="3VNN"/>
    </source>
</evidence>
<evidence type="ECO:0007744" key="46">
    <source>
        <dbReference type="PDB" id="3W1B"/>
    </source>
</evidence>
<evidence type="ECO:0007744" key="47">
    <source>
        <dbReference type="PDB" id="3W1G"/>
    </source>
</evidence>
<evidence type="ECO:0007744" key="48">
    <source>
        <dbReference type="PDB" id="3W5O"/>
    </source>
</evidence>
<evidence type="ECO:0007744" key="49">
    <source>
        <dbReference type="PDB" id="4HTO"/>
    </source>
</evidence>
<evidence type="ECO:0007744" key="50">
    <source>
        <dbReference type="PDB" id="4HTP"/>
    </source>
</evidence>
<evidence type="ECO:0007744" key="51">
    <source>
        <dbReference type="PDB" id="6BKF"/>
    </source>
</evidence>
<evidence type="ECO:0007744" key="52">
    <source>
        <dbReference type="PDB" id="6BKG"/>
    </source>
</evidence>
<evidence type="ECO:0007744" key="53">
    <source>
        <dbReference type="PDB" id="7D9K"/>
    </source>
</evidence>
<evidence type="ECO:0007744" key="54">
    <source>
        <dbReference type="PDB" id="7D9Y"/>
    </source>
</evidence>
<evidence type="ECO:0007744" key="55">
    <source>
        <dbReference type="PDB" id="7LSY"/>
    </source>
</evidence>
<evidence type="ECO:0007744" key="56">
    <source>
        <dbReference type="PDB" id="7LT3"/>
    </source>
</evidence>
<evidence type="ECO:0007744" key="57">
    <source>
        <dbReference type="PDB" id="7NFC"/>
    </source>
</evidence>
<evidence type="ECO:0007744" key="58">
    <source>
        <dbReference type="PDB" id="7NFE"/>
    </source>
</evidence>
<evidence type="ECO:0007829" key="59">
    <source>
        <dbReference type="PDB" id="1IK9"/>
    </source>
</evidence>
<evidence type="ECO:0007829" key="60">
    <source>
        <dbReference type="PDB" id="2E2W"/>
    </source>
</evidence>
<evidence type="ECO:0007829" key="61">
    <source>
        <dbReference type="PDB" id="3II6"/>
    </source>
</evidence>
<evidence type="ECO:0007829" key="62">
    <source>
        <dbReference type="PDB" id="3VNN"/>
    </source>
</evidence>
<evidence type="ECO:0007829" key="63">
    <source>
        <dbReference type="PDB" id="3W1B"/>
    </source>
</evidence>
<evidence type="ECO:0007829" key="64">
    <source>
        <dbReference type="PDB" id="4HTP"/>
    </source>
</evidence>
<evidence type="ECO:0007829" key="65">
    <source>
        <dbReference type="PDB" id="6BKF"/>
    </source>
</evidence>
<evidence type="ECO:0007829" key="66">
    <source>
        <dbReference type="PDB" id="6BKG"/>
    </source>
</evidence>
<keyword id="KW-0002">3D-structure</keyword>
<keyword id="KW-0067">ATP-binding</keyword>
<keyword id="KW-0131">Cell cycle</keyword>
<keyword id="KW-0132">Cell division</keyword>
<keyword id="KW-0903">Direct protein sequencing</keyword>
<keyword id="KW-0225">Disease variant</keyword>
<keyword id="KW-0227">DNA damage</keyword>
<keyword id="KW-0233">DNA recombination</keyword>
<keyword id="KW-0234">DNA repair</keyword>
<keyword id="KW-0436">Ligase</keyword>
<keyword id="KW-0460">Magnesium</keyword>
<keyword id="KW-0479">Metal-binding</keyword>
<keyword id="KW-0547">Nucleotide-binding</keyword>
<keyword id="KW-0539">Nucleus</keyword>
<keyword id="KW-1267">Proteomics identification</keyword>
<keyword id="KW-1185">Reference proteome</keyword>
<keyword id="KW-0677">Repeat</keyword>
<keyword id="KW-0705">SCID</keyword>
<dbReference type="EC" id="6.5.1.1" evidence="4 22 29 37"/>
<dbReference type="EMBL" id="X83441">
    <property type="protein sequence ID" value="CAA58467.1"/>
    <property type="status" value="ALT_INIT"/>
    <property type="molecule type" value="mRNA"/>
</dbReference>
<dbReference type="EMBL" id="AF479264">
    <property type="protein sequence ID" value="AAL77435.1"/>
    <property type="status" value="ALT_INIT"/>
    <property type="molecule type" value="Genomic_DNA"/>
</dbReference>
<dbReference type="EMBL" id="AL157762">
    <property type="status" value="NOT_ANNOTATED_CDS"/>
    <property type="molecule type" value="Genomic_DNA"/>
</dbReference>
<dbReference type="EMBL" id="BC037491">
    <property type="protein sequence ID" value="AAH37491.1"/>
    <property type="molecule type" value="mRNA"/>
</dbReference>
<dbReference type="CCDS" id="CCDS9508.1"/>
<dbReference type="PIR" id="I37079">
    <property type="entry name" value="I37079"/>
</dbReference>
<dbReference type="RefSeq" id="NP_001091738.1">
    <property type="nucleotide sequence ID" value="NM_001098268.2"/>
</dbReference>
<dbReference type="RefSeq" id="NP_001317524.1">
    <property type="nucleotide sequence ID" value="NM_001330595.1"/>
</dbReference>
<dbReference type="RefSeq" id="NP_001339527.1">
    <property type="nucleotide sequence ID" value="NM_001352598.2"/>
</dbReference>
<dbReference type="RefSeq" id="NP_001339528.1">
    <property type="nucleotide sequence ID" value="NM_001352599.2"/>
</dbReference>
<dbReference type="RefSeq" id="NP_001339529.1">
    <property type="nucleotide sequence ID" value="NM_001352600.2"/>
</dbReference>
<dbReference type="RefSeq" id="NP_001339530.1">
    <property type="nucleotide sequence ID" value="NM_001352601.2"/>
</dbReference>
<dbReference type="RefSeq" id="NP_001339531.1">
    <property type="nucleotide sequence ID" value="NM_001352602.2"/>
</dbReference>
<dbReference type="RefSeq" id="NP_001339532.1">
    <property type="nucleotide sequence ID" value="NM_001352603.1"/>
</dbReference>
<dbReference type="RefSeq" id="NP_001366024.1">
    <property type="nucleotide sequence ID" value="NM_001379095.1"/>
</dbReference>
<dbReference type="RefSeq" id="NP_002303.2">
    <property type="nucleotide sequence ID" value="NM_002312.3"/>
</dbReference>
<dbReference type="RefSeq" id="NP_996820.1">
    <property type="nucleotide sequence ID" value="NM_206937.2"/>
</dbReference>
<dbReference type="RefSeq" id="XP_005254113.1">
    <property type="nucleotide sequence ID" value="XM_005254056.1"/>
</dbReference>
<dbReference type="RefSeq" id="XP_005254114.1">
    <property type="nucleotide sequence ID" value="XM_005254057.4"/>
</dbReference>
<dbReference type="RefSeq" id="XP_005254115.1">
    <property type="nucleotide sequence ID" value="XM_005254058.3"/>
</dbReference>
<dbReference type="RefSeq" id="XP_006720014.1">
    <property type="nucleotide sequence ID" value="XM_006719951.3"/>
</dbReference>
<dbReference type="RefSeq" id="XP_006720015.1">
    <property type="nucleotide sequence ID" value="XM_006719952.1"/>
</dbReference>
<dbReference type="RefSeq" id="XP_011519393.1">
    <property type="nucleotide sequence ID" value="XM_011521091.2"/>
</dbReference>
<dbReference type="RefSeq" id="XP_011519394.1">
    <property type="nucleotide sequence ID" value="XM_011521092.2"/>
</dbReference>
<dbReference type="RefSeq" id="XP_016876058.1">
    <property type="nucleotide sequence ID" value="XM_017020569.1"/>
</dbReference>
<dbReference type="RefSeq" id="XP_016876059.1">
    <property type="nucleotide sequence ID" value="XM_017020570.1"/>
</dbReference>
<dbReference type="RefSeq" id="XP_016876060.1">
    <property type="nucleotide sequence ID" value="XM_017020571.1"/>
</dbReference>
<dbReference type="RefSeq" id="XP_016876062.1">
    <property type="nucleotide sequence ID" value="XM_017020573.1"/>
</dbReference>
<dbReference type="PDB" id="1IK9">
    <property type="method" value="X-ray"/>
    <property type="resolution" value="2.30 A"/>
    <property type="chains" value="C=748-784"/>
</dbReference>
<dbReference type="PDB" id="2E2W">
    <property type="method" value="NMR"/>
    <property type="chains" value="A=654-759"/>
</dbReference>
<dbReference type="PDB" id="3II6">
    <property type="method" value="X-ray"/>
    <property type="resolution" value="2.40 A"/>
    <property type="chains" value="X/Y=654-911"/>
</dbReference>
<dbReference type="PDB" id="3VNN">
    <property type="method" value="X-ray"/>
    <property type="resolution" value="2.90 A"/>
    <property type="chains" value="A=268-406"/>
</dbReference>
<dbReference type="PDB" id="3W1B">
    <property type="method" value="X-ray"/>
    <property type="resolution" value="2.40 A"/>
    <property type="chains" value="A=1-609"/>
</dbReference>
<dbReference type="PDB" id="3W1G">
    <property type="method" value="X-ray"/>
    <property type="resolution" value="2.55 A"/>
    <property type="chains" value="A=1-609"/>
</dbReference>
<dbReference type="PDB" id="3W5O">
    <property type="method" value="X-ray"/>
    <property type="resolution" value="2.84 A"/>
    <property type="chains" value="A/B=1-609"/>
</dbReference>
<dbReference type="PDB" id="4HTO">
    <property type="method" value="X-ray"/>
    <property type="resolution" value="2.81 A"/>
    <property type="chains" value="A=1-240"/>
</dbReference>
<dbReference type="PDB" id="4HTP">
    <property type="method" value="X-ray"/>
    <property type="resolution" value="2.25 A"/>
    <property type="chains" value="A/B=1-240"/>
</dbReference>
<dbReference type="PDB" id="6BKF">
    <property type="method" value="X-ray"/>
    <property type="resolution" value="3.25 A"/>
    <property type="chains" value="A=1-620"/>
</dbReference>
<dbReference type="PDB" id="6BKG">
    <property type="method" value="X-ray"/>
    <property type="resolution" value="2.40 A"/>
    <property type="chains" value="A=1-620"/>
</dbReference>
<dbReference type="PDB" id="7D9K">
    <property type="method" value="X-ray"/>
    <property type="resolution" value="2.90 A"/>
    <property type="chains" value="A=1-240"/>
</dbReference>
<dbReference type="PDB" id="7D9Y">
    <property type="method" value="X-ray"/>
    <property type="resolution" value="2.76 A"/>
    <property type="chains" value="A=1-240"/>
</dbReference>
<dbReference type="PDB" id="7LSY">
    <property type="method" value="EM"/>
    <property type="resolution" value="8.40 A"/>
    <property type="chains" value="X/Y=1-911"/>
</dbReference>
<dbReference type="PDB" id="7LT3">
    <property type="method" value="EM"/>
    <property type="resolution" value="4.60 A"/>
    <property type="chains" value="X/Y=1-911"/>
</dbReference>
<dbReference type="PDB" id="7NFC">
    <property type="method" value="EM"/>
    <property type="resolution" value="4.14 A"/>
    <property type="chains" value="M/P=1-911"/>
</dbReference>
<dbReference type="PDB" id="7NFE">
    <property type="method" value="EM"/>
    <property type="resolution" value="4.29 A"/>
    <property type="chains" value="J=1-911"/>
</dbReference>
<dbReference type="PDB" id="8BH3">
    <property type="method" value="EM"/>
    <property type="resolution" value="4.55 A"/>
    <property type="chains" value="I/R=1-911"/>
</dbReference>
<dbReference type="PDB" id="8BHV">
    <property type="method" value="EM"/>
    <property type="resolution" value="4.51 A"/>
    <property type="chains" value="M/P=1-911"/>
</dbReference>
<dbReference type="PDB" id="8BHY">
    <property type="method" value="EM"/>
    <property type="resolution" value="5.33 A"/>
    <property type="chains" value="I/R=1-911"/>
</dbReference>
<dbReference type="PDB" id="8BOT">
    <property type="method" value="EM"/>
    <property type="resolution" value="7.76 A"/>
    <property type="chains" value="M/P=1-911"/>
</dbReference>
<dbReference type="PDB" id="8EZA">
    <property type="method" value="EM"/>
    <property type="resolution" value="4.39 A"/>
    <property type="chains" value="X/Y=1-911"/>
</dbReference>
<dbReference type="PDB" id="8EZB">
    <property type="method" value="EM"/>
    <property type="resolution" value="8.90 A"/>
    <property type="chains" value="X/Y=1-911"/>
</dbReference>
<dbReference type="PDBsum" id="1IK9"/>
<dbReference type="PDBsum" id="2E2W"/>
<dbReference type="PDBsum" id="3II6"/>
<dbReference type="PDBsum" id="3VNN"/>
<dbReference type="PDBsum" id="3W1B"/>
<dbReference type="PDBsum" id="3W1G"/>
<dbReference type="PDBsum" id="3W5O"/>
<dbReference type="PDBsum" id="4HTO"/>
<dbReference type="PDBsum" id="4HTP"/>
<dbReference type="PDBsum" id="6BKF"/>
<dbReference type="PDBsum" id="6BKG"/>
<dbReference type="PDBsum" id="7D9K"/>
<dbReference type="PDBsum" id="7D9Y"/>
<dbReference type="PDBsum" id="7LSY"/>
<dbReference type="PDBsum" id="7LT3"/>
<dbReference type="PDBsum" id="7NFC"/>
<dbReference type="PDBsum" id="7NFE"/>
<dbReference type="PDBsum" id="8BH3"/>
<dbReference type="PDBsum" id="8BHV"/>
<dbReference type="PDBsum" id="8BHY"/>
<dbReference type="PDBsum" id="8BOT"/>
<dbReference type="PDBsum" id="8EZA"/>
<dbReference type="PDBsum" id="8EZB"/>
<dbReference type="EMDB" id="EMD-12299"/>
<dbReference type="EMDB" id="EMD-12301"/>
<dbReference type="EMDB" id="EMD-16044"/>
<dbReference type="EMDB" id="EMD-16070"/>
<dbReference type="EMDB" id="EMD-16074"/>
<dbReference type="EMDB" id="EMD-16145"/>
<dbReference type="EMDB" id="EMD-23509"/>
<dbReference type="EMDB" id="EMD-23510"/>
<dbReference type="EMDB" id="EMD-23511"/>
<dbReference type="EMDB" id="EMD-23512"/>
<dbReference type="EMDB" id="EMD-23513"/>
<dbReference type="EMDB" id="EMD-23515"/>
<dbReference type="EMDB" id="EMD-28732"/>
<dbReference type="EMDB" id="EMD-28733"/>
<dbReference type="EMDB" id="EMD-28735"/>
<dbReference type="SASBDB" id="P49917"/>
<dbReference type="SMR" id="P49917"/>
<dbReference type="BioGRID" id="110169">
    <property type="interactions" value="152"/>
</dbReference>
<dbReference type="ComplexPortal" id="CPX-618">
    <property type="entry name" value="DNA ligase IV complex"/>
</dbReference>
<dbReference type="CORUM" id="P49917"/>
<dbReference type="DIP" id="DIP-37958N"/>
<dbReference type="FunCoup" id="P49917">
    <property type="interactions" value="1975"/>
</dbReference>
<dbReference type="IntAct" id="P49917">
    <property type="interactions" value="18"/>
</dbReference>
<dbReference type="MINT" id="P49917"/>
<dbReference type="STRING" id="9606.ENSP00000484288"/>
<dbReference type="BindingDB" id="P49917"/>
<dbReference type="ChEMBL" id="CHEMBL4523595"/>
<dbReference type="GlyGen" id="P49917">
    <property type="glycosylation" value="1 site"/>
</dbReference>
<dbReference type="iPTMnet" id="P49917"/>
<dbReference type="PhosphoSitePlus" id="P49917"/>
<dbReference type="BioMuta" id="LIG4"/>
<dbReference type="DMDM" id="88911290"/>
<dbReference type="jPOST" id="P49917"/>
<dbReference type="MassIVE" id="P49917"/>
<dbReference type="PaxDb" id="9606-ENSP00000484288"/>
<dbReference type="PeptideAtlas" id="P49917"/>
<dbReference type="ProteomicsDB" id="56183"/>
<dbReference type="Pumba" id="P49917"/>
<dbReference type="Antibodypedia" id="705">
    <property type="antibodies" value="326 antibodies from 32 providers"/>
</dbReference>
<dbReference type="CPTC" id="P49917">
    <property type="antibodies" value="1 antibody"/>
</dbReference>
<dbReference type="DNASU" id="3981"/>
<dbReference type="Ensembl" id="ENST00000405925.2">
    <property type="protein sequence ID" value="ENSP00000385955.1"/>
    <property type="gene ID" value="ENSG00000174405.15"/>
</dbReference>
<dbReference type="Ensembl" id="ENST00000442234.6">
    <property type="protein sequence ID" value="ENSP00000402030.1"/>
    <property type="gene ID" value="ENSG00000174405.15"/>
</dbReference>
<dbReference type="Ensembl" id="ENST00000611712.4">
    <property type="protein sequence ID" value="ENSP00000484288.1"/>
    <property type="gene ID" value="ENSG00000174405.15"/>
</dbReference>
<dbReference type="Ensembl" id="ENST00000685338.1">
    <property type="protein sequence ID" value="ENSP00000510567.1"/>
    <property type="gene ID" value="ENSG00000174405.15"/>
</dbReference>
<dbReference type="Ensembl" id="ENST00000686095.1">
    <property type="protein sequence ID" value="ENSP00000509942.1"/>
    <property type="gene ID" value="ENSG00000174405.15"/>
</dbReference>
<dbReference type="Ensembl" id="ENST00000686204.1">
    <property type="protein sequence ID" value="ENSP00000509685.1"/>
    <property type="gene ID" value="ENSG00000174405.15"/>
</dbReference>
<dbReference type="Ensembl" id="ENST00000686913.1">
    <property type="protein sequence ID" value="ENSP00000509299.1"/>
    <property type="gene ID" value="ENSG00000174405.15"/>
</dbReference>
<dbReference type="Ensembl" id="ENST00000686926.1">
    <property type="protein sequence ID" value="ENSP00000509122.1"/>
    <property type="gene ID" value="ENSG00000174405.15"/>
</dbReference>
<dbReference type="Ensembl" id="ENST00000687164.1">
    <property type="protein sequence ID" value="ENSP00000508512.1"/>
    <property type="gene ID" value="ENSG00000174405.15"/>
</dbReference>
<dbReference type="Ensembl" id="ENST00000687822.1">
    <property type="protein sequence ID" value="ENSP00000509344.1"/>
    <property type="gene ID" value="ENSG00000174405.15"/>
</dbReference>
<dbReference type="Ensembl" id="ENST00000688396.1">
    <property type="protein sequence ID" value="ENSP00000509564.1"/>
    <property type="gene ID" value="ENSG00000174405.15"/>
</dbReference>
<dbReference type="Ensembl" id="ENST00000688455.1">
    <property type="protein sequence ID" value="ENSP00000509304.1"/>
    <property type="gene ID" value="ENSG00000174405.15"/>
</dbReference>
<dbReference type="Ensembl" id="ENST00000688529.1">
    <property type="protein sequence ID" value="ENSP00000509906.1"/>
    <property type="gene ID" value="ENSG00000174405.15"/>
</dbReference>
<dbReference type="Ensembl" id="ENST00000688595.1">
    <property type="protein sequence ID" value="ENSP00000509502.1"/>
    <property type="gene ID" value="ENSG00000174405.15"/>
</dbReference>
<dbReference type="Ensembl" id="ENST00000692222.1">
    <property type="protein sequence ID" value="ENSP00000509226.1"/>
    <property type="gene ID" value="ENSG00000174405.15"/>
</dbReference>
<dbReference type="Ensembl" id="ENST00000693040.1">
    <property type="protein sequence ID" value="ENSP00000510014.1"/>
    <property type="gene ID" value="ENSG00000174405.15"/>
</dbReference>
<dbReference type="GeneID" id="3981"/>
<dbReference type="KEGG" id="hsa:3981"/>
<dbReference type="MANE-Select" id="ENST00000442234.6">
    <property type="protein sequence ID" value="ENSP00000402030.1"/>
    <property type="RefSeq nucleotide sequence ID" value="NM_206937.2"/>
    <property type="RefSeq protein sequence ID" value="NP_996820.1"/>
</dbReference>
<dbReference type="UCSC" id="uc001vqn.4">
    <property type="organism name" value="human"/>
</dbReference>
<dbReference type="AGR" id="HGNC:6601"/>
<dbReference type="CTD" id="3981"/>
<dbReference type="DisGeNET" id="3981"/>
<dbReference type="GeneCards" id="LIG4"/>
<dbReference type="HGNC" id="HGNC:6601">
    <property type="gene designation" value="LIG4"/>
</dbReference>
<dbReference type="HPA" id="ENSG00000174405">
    <property type="expression patterns" value="Low tissue specificity"/>
</dbReference>
<dbReference type="MalaCards" id="LIG4"/>
<dbReference type="MIM" id="601837">
    <property type="type" value="gene"/>
</dbReference>
<dbReference type="MIM" id="602450">
    <property type="type" value="phenotype"/>
</dbReference>
<dbReference type="MIM" id="606593">
    <property type="type" value="phenotype"/>
</dbReference>
<dbReference type="neXtProt" id="NX_P49917"/>
<dbReference type="OpenTargets" id="ENSG00000174405"/>
<dbReference type="Orphanet" id="235">
    <property type="disease" value="Dubowitz syndrome"/>
</dbReference>
<dbReference type="Orphanet" id="99812">
    <property type="disease" value="LIG4 syndrome"/>
</dbReference>
<dbReference type="Orphanet" id="39041">
    <property type="disease" value="Omenn syndrome"/>
</dbReference>
<dbReference type="PharmGKB" id="PA30375"/>
<dbReference type="VEuPathDB" id="HostDB:ENSG00000174405"/>
<dbReference type="eggNOG" id="KOG0966">
    <property type="taxonomic scope" value="Eukaryota"/>
</dbReference>
<dbReference type="GeneTree" id="ENSGT00860000133881"/>
<dbReference type="InParanoid" id="P49917"/>
<dbReference type="OMA" id="EGIMIKH"/>
<dbReference type="OrthoDB" id="151490at2759"/>
<dbReference type="PAN-GO" id="P49917">
    <property type="GO annotations" value="8 GO annotations based on evolutionary models"/>
</dbReference>
<dbReference type="PhylomeDB" id="P49917"/>
<dbReference type="TreeFam" id="TF312980"/>
<dbReference type="BRENDA" id="6.5.1.1">
    <property type="organism ID" value="2681"/>
</dbReference>
<dbReference type="PathwayCommons" id="P49917"/>
<dbReference type="Reactome" id="R-HSA-164843">
    <property type="pathway name" value="2-LTR circle formation"/>
</dbReference>
<dbReference type="Reactome" id="R-HSA-5693571">
    <property type="pathway name" value="Nonhomologous End-Joining (NHEJ)"/>
</dbReference>
<dbReference type="SignaLink" id="P49917"/>
<dbReference type="SIGNOR" id="P49917"/>
<dbReference type="BioGRID-ORCS" id="3981">
    <property type="hits" value="69 hits in 1158 CRISPR screens"/>
</dbReference>
<dbReference type="ChiTaRS" id="LIG4">
    <property type="organism name" value="human"/>
</dbReference>
<dbReference type="EvolutionaryTrace" id="P49917"/>
<dbReference type="GeneWiki" id="LIG4"/>
<dbReference type="GenomeRNAi" id="3981"/>
<dbReference type="Pharos" id="P49917">
    <property type="development level" value="Tbio"/>
</dbReference>
<dbReference type="PRO" id="PR:P49917"/>
<dbReference type="Proteomes" id="UP000005640">
    <property type="component" value="Chromosome 13"/>
</dbReference>
<dbReference type="RNAct" id="P49917">
    <property type="molecule type" value="protein"/>
</dbReference>
<dbReference type="Bgee" id="ENSG00000174405">
    <property type="expression patterns" value="Expressed in endothelial cell and 194 other cell types or tissues"/>
</dbReference>
<dbReference type="ExpressionAtlas" id="P49917">
    <property type="expression patterns" value="baseline and differential"/>
</dbReference>
<dbReference type="GO" id="GO:0000781">
    <property type="term" value="C:chromosome, telomeric region"/>
    <property type="evidence" value="ECO:0000305"/>
    <property type="project" value="BHF-UCL"/>
</dbReference>
<dbReference type="GO" id="GO:0000793">
    <property type="term" value="C:condensed chromosome"/>
    <property type="evidence" value="ECO:0000314"/>
    <property type="project" value="UniProtKB"/>
</dbReference>
<dbReference type="GO" id="GO:0032807">
    <property type="term" value="C:DNA ligase IV complex"/>
    <property type="evidence" value="ECO:0000315"/>
    <property type="project" value="UniProtKB"/>
</dbReference>
<dbReference type="GO" id="GO:0005958">
    <property type="term" value="C:DNA-dependent protein kinase-DNA ligase 4 complex"/>
    <property type="evidence" value="ECO:0000314"/>
    <property type="project" value="UniProtKB"/>
</dbReference>
<dbReference type="GO" id="GO:0043231">
    <property type="term" value="C:intracellular membrane-bounded organelle"/>
    <property type="evidence" value="ECO:0000314"/>
    <property type="project" value="HPA"/>
</dbReference>
<dbReference type="GO" id="GO:0070419">
    <property type="term" value="C:nonhomologous end joining complex"/>
    <property type="evidence" value="ECO:0000314"/>
    <property type="project" value="UniProtKB"/>
</dbReference>
<dbReference type="GO" id="GO:0005654">
    <property type="term" value="C:nucleoplasm"/>
    <property type="evidence" value="ECO:0000314"/>
    <property type="project" value="HPA"/>
</dbReference>
<dbReference type="GO" id="GO:0005634">
    <property type="term" value="C:nucleus"/>
    <property type="evidence" value="ECO:0000314"/>
    <property type="project" value="UniProtKB"/>
</dbReference>
<dbReference type="GO" id="GO:0005524">
    <property type="term" value="F:ATP binding"/>
    <property type="evidence" value="ECO:0000318"/>
    <property type="project" value="GO_Central"/>
</dbReference>
<dbReference type="GO" id="GO:0003677">
    <property type="term" value="F:DNA binding"/>
    <property type="evidence" value="ECO:0000314"/>
    <property type="project" value="UniProtKB"/>
</dbReference>
<dbReference type="GO" id="GO:0003910">
    <property type="term" value="F:DNA ligase (ATP) activity"/>
    <property type="evidence" value="ECO:0000314"/>
    <property type="project" value="UniProtKB"/>
</dbReference>
<dbReference type="GO" id="GO:0003909">
    <property type="term" value="F:DNA ligase activity"/>
    <property type="evidence" value="ECO:0000314"/>
    <property type="project" value="UniProtKB"/>
</dbReference>
<dbReference type="GO" id="GO:0016874">
    <property type="term" value="F:ligase activity"/>
    <property type="evidence" value="ECO:0000314"/>
    <property type="project" value="UniProtKB"/>
</dbReference>
<dbReference type="GO" id="GO:0000287">
    <property type="term" value="F:magnesium ion binding"/>
    <property type="evidence" value="ECO:0000314"/>
    <property type="project" value="UniProtKB"/>
</dbReference>
<dbReference type="GO" id="GO:0006284">
    <property type="term" value="P:base-excision repair"/>
    <property type="evidence" value="ECO:0000314"/>
    <property type="project" value="BHF-UCL"/>
</dbReference>
<dbReference type="GO" id="GO:0051301">
    <property type="term" value="P:cell division"/>
    <property type="evidence" value="ECO:0007669"/>
    <property type="project" value="UniProtKB-KW"/>
</dbReference>
<dbReference type="GO" id="GO:0008283">
    <property type="term" value="P:cell population proliferation"/>
    <property type="evidence" value="ECO:0000250"/>
    <property type="project" value="UniProtKB"/>
</dbReference>
<dbReference type="GO" id="GO:0071479">
    <property type="term" value="P:cellular response to ionizing radiation"/>
    <property type="evidence" value="ECO:0000316"/>
    <property type="project" value="UniProtKB"/>
</dbReference>
<dbReference type="GO" id="GO:0071285">
    <property type="term" value="P:cellular response to lithium ion"/>
    <property type="evidence" value="ECO:0007669"/>
    <property type="project" value="Ensembl"/>
</dbReference>
<dbReference type="GO" id="GO:0007417">
    <property type="term" value="P:central nervous system development"/>
    <property type="evidence" value="ECO:0000250"/>
    <property type="project" value="UniProtKB"/>
</dbReference>
<dbReference type="GO" id="GO:0051276">
    <property type="term" value="P:chromosome organization"/>
    <property type="evidence" value="ECO:0000250"/>
    <property type="project" value="UniProtKB"/>
</dbReference>
<dbReference type="GO" id="GO:1904155">
    <property type="term" value="P:DN2 thymocyte differentiation"/>
    <property type="evidence" value="ECO:0007669"/>
    <property type="project" value="Ensembl"/>
</dbReference>
<dbReference type="GO" id="GO:0071897">
    <property type="term" value="P:DNA biosynthetic process"/>
    <property type="evidence" value="ECO:0007669"/>
    <property type="project" value="InterPro"/>
</dbReference>
<dbReference type="GO" id="GO:0006302">
    <property type="term" value="P:double-strand break repair"/>
    <property type="evidence" value="ECO:0000314"/>
    <property type="project" value="UniProtKB"/>
</dbReference>
<dbReference type="GO" id="GO:0097680">
    <property type="term" value="P:double-strand break repair via classical nonhomologous end joining"/>
    <property type="evidence" value="ECO:0000315"/>
    <property type="project" value="BHF-UCL"/>
</dbReference>
<dbReference type="GO" id="GO:0006303">
    <property type="term" value="P:double-strand break repair via nonhomologous end joining"/>
    <property type="evidence" value="ECO:0000314"/>
    <property type="project" value="UniProtKB"/>
</dbReference>
<dbReference type="GO" id="GO:0075713">
    <property type="term" value="P:establishment of integrated proviral latency"/>
    <property type="evidence" value="ECO:0000304"/>
    <property type="project" value="Reactome"/>
</dbReference>
<dbReference type="GO" id="GO:0048144">
    <property type="term" value="P:fibroblast proliferation"/>
    <property type="evidence" value="ECO:0007669"/>
    <property type="project" value="Ensembl"/>
</dbReference>
<dbReference type="GO" id="GO:0033152">
    <property type="term" value="P:immunoglobulin V(D)J recombination"/>
    <property type="evidence" value="ECO:0000318"/>
    <property type="project" value="GO_Central"/>
</dbReference>
<dbReference type="GO" id="GO:0001701">
    <property type="term" value="P:in utero embryonic development"/>
    <property type="evidence" value="ECO:0000250"/>
    <property type="project" value="UniProtKB"/>
</dbReference>
<dbReference type="GO" id="GO:0045190">
    <property type="term" value="P:isotype switching"/>
    <property type="evidence" value="ECO:0000250"/>
    <property type="project" value="UniProtKB"/>
</dbReference>
<dbReference type="GO" id="GO:0043524">
    <property type="term" value="P:negative regulation of neuron apoptotic process"/>
    <property type="evidence" value="ECO:0000250"/>
    <property type="project" value="UniProtKB"/>
</dbReference>
<dbReference type="GO" id="GO:0022008">
    <property type="term" value="P:neurogenesis"/>
    <property type="evidence" value="ECO:0007669"/>
    <property type="project" value="Ensembl"/>
</dbReference>
<dbReference type="GO" id="GO:0051402">
    <property type="term" value="P:neuron apoptotic process"/>
    <property type="evidence" value="ECO:0000250"/>
    <property type="project" value="UniProtKB"/>
</dbReference>
<dbReference type="GO" id="GO:0006297">
    <property type="term" value="P:nucleotide-excision repair, DNA gap filling"/>
    <property type="evidence" value="ECO:0000314"/>
    <property type="project" value="UniProtKB"/>
</dbReference>
<dbReference type="GO" id="GO:2001252">
    <property type="term" value="P:positive regulation of chromosome organization"/>
    <property type="evidence" value="ECO:0000315"/>
    <property type="project" value="BHF-UCL"/>
</dbReference>
<dbReference type="GO" id="GO:0048146">
    <property type="term" value="P:positive regulation of fibroblast proliferation"/>
    <property type="evidence" value="ECO:0000250"/>
    <property type="project" value="UniProtKB"/>
</dbReference>
<dbReference type="GO" id="GO:0050769">
    <property type="term" value="P:positive regulation of neurogenesis"/>
    <property type="evidence" value="ECO:0000250"/>
    <property type="project" value="UniProtKB"/>
</dbReference>
<dbReference type="GO" id="GO:0002328">
    <property type="term" value="P:pro-B cell differentiation"/>
    <property type="evidence" value="ECO:0000250"/>
    <property type="project" value="UniProtKB"/>
</dbReference>
<dbReference type="GO" id="GO:0010332">
    <property type="term" value="P:response to gamma radiation"/>
    <property type="evidence" value="ECO:0000250"/>
    <property type="project" value="UniProtKB"/>
</dbReference>
<dbReference type="GO" id="GO:0010165">
    <property type="term" value="P:response to X-ray"/>
    <property type="evidence" value="ECO:0000315"/>
    <property type="project" value="UniProtKB"/>
</dbReference>
<dbReference type="GO" id="GO:0000012">
    <property type="term" value="P:single strand break repair"/>
    <property type="evidence" value="ECO:0000314"/>
    <property type="project" value="UniProtKB"/>
</dbReference>
<dbReference type="GO" id="GO:0035019">
    <property type="term" value="P:somatic stem cell population maintenance"/>
    <property type="evidence" value="ECO:0000250"/>
    <property type="project" value="UniProtKB"/>
</dbReference>
<dbReference type="GO" id="GO:0072089">
    <property type="term" value="P:stem cell proliferation"/>
    <property type="evidence" value="ECO:0007669"/>
    <property type="project" value="Ensembl"/>
</dbReference>
<dbReference type="GO" id="GO:0033077">
    <property type="term" value="P:T cell differentiation in thymus"/>
    <property type="evidence" value="ECO:0000250"/>
    <property type="project" value="UniProtKB"/>
</dbReference>
<dbReference type="GO" id="GO:0033153">
    <property type="term" value="P:T cell receptor V(D)J recombination"/>
    <property type="evidence" value="ECO:0000250"/>
    <property type="project" value="UniProtKB"/>
</dbReference>
<dbReference type="GO" id="GO:0033151">
    <property type="term" value="P:V(D)J recombination"/>
    <property type="evidence" value="ECO:0000314"/>
    <property type="project" value="UniProtKB"/>
</dbReference>
<dbReference type="CDD" id="cd07903">
    <property type="entry name" value="Adenylation_DNA_ligase_IV"/>
    <property type="match status" value="1"/>
</dbReference>
<dbReference type="CDD" id="cd17722">
    <property type="entry name" value="BRCT_DNA_ligase_IV_rpt1"/>
    <property type="match status" value="1"/>
</dbReference>
<dbReference type="CDD" id="cd17717">
    <property type="entry name" value="BRCT_DNA_ligase_IV_rpt2"/>
    <property type="match status" value="1"/>
</dbReference>
<dbReference type="CDD" id="cd07968">
    <property type="entry name" value="OBF_DNA_ligase_IV"/>
    <property type="match status" value="1"/>
</dbReference>
<dbReference type="FunFam" id="1.10.3260.10:FF:000003">
    <property type="entry name" value="DNA ligase"/>
    <property type="match status" value="1"/>
</dbReference>
<dbReference type="FunFam" id="2.40.50.140:FF:000150">
    <property type="entry name" value="DNA ligase"/>
    <property type="match status" value="1"/>
</dbReference>
<dbReference type="FunFam" id="3.30.470.30:FF:000008">
    <property type="entry name" value="DNA ligase"/>
    <property type="match status" value="1"/>
</dbReference>
<dbReference type="FunFam" id="3.40.50.10190:FF:000027">
    <property type="entry name" value="DNA ligase"/>
    <property type="match status" value="1"/>
</dbReference>
<dbReference type="FunFam" id="3.40.50.10190:FF:000050">
    <property type="entry name" value="DNA ligase"/>
    <property type="match status" value="1"/>
</dbReference>
<dbReference type="Gene3D" id="6.10.250.520">
    <property type="match status" value="1"/>
</dbReference>
<dbReference type="Gene3D" id="3.40.50.10190">
    <property type="entry name" value="BRCT domain"/>
    <property type="match status" value="2"/>
</dbReference>
<dbReference type="Gene3D" id="1.10.3260.10">
    <property type="entry name" value="DNA ligase, ATP-dependent, N-terminal domain"/>
    <property type="match status" value="1"/>
</dbReference>
<dbReference type="Gene3D" id="3.30.470.30">
    <property type="entry name" value="DNA ligase/mRNA capping enzyme"/>
    <property type="match status" value="1"/>
</dbReference>
<dbReference type="Gene3D" id="2.40.50.140">
    <property type="entry name" value="Nucleic acid-binding proteins"/>
    <property type="match status" value="1"/>
</dbReference>
<dbReference type="InterPro" id="IPR044125">
    <property type="entry name" value="Adenylation_DNA_ligase_IV"/>
</dbReference>
<dbReference type="InterPro" id="IPR001357">
    <property type="entry name" value="BRCT_dom"/>
</dbReference>
<dbReference type="InterPro" id="IPR036420">
    <property type="entry name" value="BRCT_dom_sf"/>
</dbReference>
<dbReference type="InterPro" id="IPR000977">
    <property type="entry name" value="DNA_ligase_ATP-dep"/>
</dbReference>
<dbReference type="InterPro" id="IPR012309">
    <property type="entry name" value="DNA_ligase_ATP-dep_C"/>
</dbReference>
<dbReference type="InterPro" id="IPR012310">
    <property type="entry name" value="DNA_ligase_ATP-dep_cent"/>
</dbReference>
<dbReference type="InterPro" id="IPR016059">
    <property type="entry name" value="DNA_ligase_ATP-dep_CS"/>
</dbReference>
<dbReference type="InterPro" id="IPR012308">
    <property type="entry name" value="DNA_ligase_ATP-dep_N"/>
</dbReference>
<dbReference type="InterPro" id="IPR021536">
    <property type="entry name" value="DNA_ligase_IV_dom"/>
</dbReference>
<dbReference type="InterPro" id="IPR036599">
    <property type="entry name" value="DNA_ligase_N_sf"/>
</dbReference>
<dbReference type="InterPro" id="IPR029710">
    <property type="entry name" value="LIG4"/>
</dbReference>
<dbReference type="InterPro" id="IPR012340">
    <property type="entry name" value="NA-bd_OB-fold"/>
</dbReference>
<dbReference type="NCBIfam" id="TIGR00574">
    <property type="entry name" value="dnl1"/>
    <property type="match status" value="1"/>
</dbReference>
<dbReference type="PANTHER" id="PTHR45997">
    <property type="entry name" value="DNA LIGASE 4"/>
    <property type="match status" value="1"/>
</dbReference>
<dbReference type="PANTHER" id="PTHR45997:SF1">
    <property type="entry name" value="DNA LIGASE 4"/>
    <property type="match status" value="1"/>
</dbReference>
<dbReference type="Pfam" id="PF00533">
    <property type="entry name" value="BRCT"/>
    <property type="match status" value="2"/>
</dbReference>
<dbReference type="Pfam" id="PF04679">
    <property type="entry name" value="DNA_ligase_A_C"/>
    <property type="match status" value="1"/>
</dbReference>
<dbReference type="Pfam" id="PF01068">
    <property type="entry name" value="DNA_ligase_A_M"/>
    <property type="match status" value="1"/>
</dbReference>
<dbReference type="Pfam" id="PF04675">
    <property type="entry name" value="DNA_ligase_A_N"/>
    <property type="match status" value="1"/>
</dbReference>
<dbReference type="Pfam" id="PF11411">
    <property type="entry name" value="DNA_ligase_IV"/>
    <property type="match status" value="1"/>
</dbReference>
<dbReference type="SMART" id="SM00292">
    <property type="entry name" value="BRCT"/>
    <property type="match status" value="2"/>
</dbReference>
<dbReference type="SUPFAM" id="SSF117018">
    <property type="entry name" value="ATP-dependent DNA ligase DNA-binding domain"/>
    <property type="match status" value="1"/>
</dbReference>
<dbReference type="SUPFAM" id="SSF52113">
    <property type="entry name" value="BRCT domain"/>
    <property type="match status" value="2"/>
</dbReference>
<dbReference type="SUPFAM" id="SSF56091">
    <property type="entry name" value="DNA ligase/mRNA capping enzyme, catalytic domain"/>
    <property type="match status" value="1"/>
</dbReference>
<dbReference type="SUPFAM" id="SSF50249">
    <property type="entry name" value="Nucleic acid-binding proteins"/>
    <property type="match status" value="1"/>
</dbReference>
<dbReference type="PROSITE" id="PS50172">
    <property type="entry name" value="BRCT"/>
    <property type="match status" value="2"/>
</dbReference>
<dbReference type="PROSITE" id="PS00697">
    <property type="entry name" value="DNA_LIGASE_A1"/>
    <property type="match status" value="1"/>
</dbReference>
<dbReference type="PROSITE" id="PS00333">
    <property type="entry name" value="DNA_LIGASE_A2"/>
    <property type="match status" value="1"/>
</dbReference>
<dbReference type="PROSITE" id="PS50160">
    <property type="entry name" value="DNA_LIGASE_A3"/>
    <property type="match status" value="1"/>
</dbReference>